<sequence>MLKCIPLWRCNRHVESVDKRHCSLQAVPEEIYRYSRSLEELLLDANQLRELPKPFFRLLNLRKLGLSDNEIQRLPPEVANFMQLVELDVSRNDIPEIPESIKFCKALEIADFSGNPLSRLPDGFTQLRSLAHLALNDVSLQALPGDVGNLANLVTLELRENLLKSLPASLSFLVKLEQLDLGGNDLEVLPDTLGALPNLRELWLDRNQLSALPPELGNLRRLVCLDVSENRLEELPAELGGLVLLTDLLLSQNLLRRLPDGIGQLKQLSILKVDQNRLCEVTEAIGDCENLSELILTENLLMALPRSLGKLTKLTNLNVDRNHLEALPPEIGGCVALSVLSLRDNRLAVLPPELAHTTELHVLDVAGNRLQSLPFALTHLNLKALWLAENQAQPMLRFQTEDDARTGEKVLTCYLLPQQPPPSLEDAGQQGSLSETWSDAPPSRVSVIQFLEAPIGDEDAEEAAAEKRGLQRRATPHPSELKVMKRSIEGRRSEACPCQPDSGSPLPAEEEKRLSAESGLSEDSRPSASTVSEAEPEGPSAEAQGGSQQEATTAGGEEDAEEDYQEPTVHFAEDALLPGDDREIEEGQPEAPWTLPGGRQRLIRKDTPHYKKHFKISKLPQPEAVVALLQGMQPDGEGPVAPGGWHNGPHAPWAPRAQKEEEEEEEGSPQEEEEEEEEENRAEEEEASTEEEDKEGAVVSAPSVKGVSFDQANNLLIEPARIEEEELTLTILRQTGGLGISIAGGKGSTPYKGDDEGIFISRVSEEGPAARAGVRVGDKLLEVNGVALQGAEHHEAVEALRGAGTAVQMRVWRERMVEPENAVTITPLRPEDDYSPRERRGGGLRLPLLPPESPGPLRQRHVACLARSERGLGFSIAGGKGSTPYRAGDAGIFVSRIAEGGAAHRAGTLQVGDRVLSINGVDVTEARHDHAVSLLTAASPTIALLLEREAGGPLPPSPLPHSSPPTAAVATTSITTATPGVPGLPSLAPSLLAAALEGPYPVEEIRLPRAGGPLGLSIVGGSDHSSHPFGVQEPGVFISKVLPRGLAARSGLRVGDRILAVNGQDVRDATHQEAVSALLRPCLELSLLVRRDPAPPGLRELCIQKAPGERLGISIRGGARGHAGNPRDPTDEGIFISKVSPTGAAGRDGRLRVGLRLLEVNQQSLLGLTHGEAVQLLRSVGDTLTVLVCDGFEASTDAALEVSPGVIANPFAAGIGHRNSLESISSIDRELSPEGPGKEKELPGQTLHWGPEATEAAGRGLQPLKLDYRALAAVPSAGSVQRVPSGAAGGKMAESPCSPSGQQPPSPPSPDELPANVKQAYRAFAAVPTSHPPEDAPAQPPTPGPAASPEQLSFRERQKYFELEVRVPQAEGPPKRVSLVGADDLRKMQEEEARKLQQKRAQMLREAAEAGAEARLALDGETLGEEEQEDEQPPWASPSPTSRQSPASPPPLGGGAPVRTAKAERRHQERLRVQSPEPPAPERALSPAELRALEAEKRALWRAARMKSLEQDALRAQMVLSRSQEGRGTRGPLERLAEAPSPAPTPSPTPVEDLGPQTSTSPGRLPLSGKKFDYRAFAALPSSRPVYDIQSPDFAEELRSLEPSPSPGPQEEDGEVALVLLGRPSPGAVGPEDVALCSSRRPVRPGRRGLGPVPS</sequence>
<gene>
    <name evidence="31" type="primary">SCRIB</name>
    <name type="synonym">CRIB1</name>
    <name type="synonym">KIAA0147</name>
    <name type="synonym">LAP4</name>
    <name type="synonym">SCRB1</name>
    <name type="synonym">VARTUL</name>
</gene>
<protein>
    <recommendedName>
        <fullName evidence="30">Protein scribble homolog</fullName>
        <shortName>Scribble</shortName>
        <shortName>hScrib</shortName>
    </recommendedName>
    <alternativeName>
        <fullName>Protein LAP4</fullName>
    </alternativeName>
</protein>
<accession>Q14160</accession>
<accession>Q6P496</accession>
<accession>Q7Z5D1</accession>
<accession>Q8WWV8</accession>
<accession>Q96C69</accession>
<accession>Q96GG1</accession>
<proteinExistence type="evidence at protein level"/>
<name>SCRIB_HUMAN</name>
<reference key="1">
    <citation type="journal article" date="2005" name="BMC Cell Biol.">
        <title>The tumor suppressor Scrib interacts with the zyxin-related protein LPP, which shuttles between cell adhesion sites and the nucleus.</title>
        <authorList>
            <person name="Petit M.M.R."/>
            <person name="Meulemans S.M.P."/>
            <person name="Alen P."/>
            <person name="Ayoubi T.A.Y."/>
            <person name="Jansen E."/>
            <person name="Van de Ven W.J.M."/>
        </authorList>
    </citation>
    <scope>NUCLEOTIDE SEQUENCE [MRNA] (ISOFORM 1)</scope>
    <scope>INTERACTION WITH LPP</scope>
    <scope>SUBCELLULAR LOCATION</scope>
    <scope>MUTAGENESIS OF 738-LEU--GLY-739; 872-LEU--GLY-873; 1014-LEU--GLY-1015 AND 1111-LEU--GLY-1112</scope>
    <scope>VARIANT LEU-422</scope>
</reference>
<reference key="2">
    <citation type="journal article" date="2005" name="Oncogene">
        <title>Junctional recruitment of mammalian Scribble relies on E-cadherin engagement.</title>
        <authorList>
            <person name="Navarro C."/>
            <person name="Nola S."/>
            <person name="Audebert S."/>
            <person name="Santoni M.-J."/>
            <person name="Arsanto J.-P."/>
            <person name="Ginestier C."/>
            <person name="Marchetto S."/>
            <person name="Jacquemier J."/>
            <person name="Isnardon D."/>
            <person name="Le Bivic A."/>
            <person name="Birnbaum D."/>
            <person name="Borg J.-P."/>
        </authorList>
    </citation>
    <scope>NUCLEOTIDE SEQUENCE [MRNA] (ISOFORM 1)</scope>
    <scope>VARIANT LEU-422</scope>
    <scope>SUBCELLULAR LOCATION</scope>
    <scope>MUTAGENESIS OF PRO-305</scope>
    <scope>TISSUE SPECIFICITY</scope>
</reference>
<reference key="3">
    <citation type="submission" date="2008-07" db="EMBL/GenBank/DDBJ databases">
        <title>The human Scrib N1 variant encoded by the SCRIB gene contains 13 leucine-rich repeats and 4 PDZ domains.</title>
        <authorList>
            <person name="Petit M.M.R."/>
            <person name="Alen P."/>
            <person name="Meulemans S.M.P."/>
            <person name="Van de Wouwer E."/>
            <person name="Ayoubi T.A.Y."/>
            <person name="Van de Ven W.J.M."/>
            <person name="Jansen E."/>
        </authorList>
    </citation>
    <scope>NUCLEOTIDE SEQUENCE [MRNA] (ISOFORM 2)</scope>
    <scope>VARIANT LEU-422</scope>
</reference>
<reference key="4">
    <citation type="journal article" date="1995" name="DNA Res.">
        <title>Prediction of the coding sequences of unidentified human genes. IV. The coding sequences of 40 new genes (KIAA0121-KIAA0160) deduced by analysis of cDNA clones from human cell line KG-1.</title>
        <authorList>
            <person name="Nagase T."/>
            <person name="Seki N."/>
            <person name="Tanaka A."/>
            <person name="Ishikawa K."/>
            <person name="Nomura N."/>
        </authorList>
    </citation>
    <scope>NUCLEOTIDE SEQUENCE [LARGE SCALE MRNA] (ISOFORM 1)</scope>
    <scope>VARIANT LEU-422</scope>
    <source>
        <tissue>Bone marrow</tissue>
        <tissue>Brain</tissue>
    </source>
</reference>
<reference key="5">
    <citation type="journal article" date="2002" name="DNA Res.">
        <title>Construction of expression-ready cDNA clones for KIAA genes: manual curation of 330 KIAA cDNA clones.</title>
        <authorList>
            <person name="Nakajima D."/>
            <person name="Okazaki N."/>
            <person name="Yamakawa H."/>
            <person name="Kikuno R."/>
            <person name="Ohara O."/>
            <person name="Nagase T."/>
        </authorList>
    </citation>
    <scope>SEQUENCE REVISION</scope>
</reference>
<reference key="6">
    <citation type="submission" date="2005-04" db="EMBL/GenBank/DDBJ databases">
        <authorList>
            <person name="Ohara O."/>
            <person name="Nagase T."/>
            <person name="Kikuno R."/>
            <person name="Nomura N."/>
        </authorList>
    </citation>
    <scope>SEQUENCE REVISION</scope>
</reference>
<reference key="7">
    <citation type="journal article" date="2006" name="Nature">
        <title>DNA sequence and analysis of human chromosome 8.</title>
        <authorList>
            <person name="Nusbaum C."/>
            <person name="Mikkelsen T.S."/>
            <person name="Zody M.C."/>
            <person name="Asakawa S."/>
            <person name="Taudien S."/>
            <person name="Garber M."/>
            <person name="Kodira C.D."/>
            <person name="Schueler M.G."/>
            <person name="Shimizu A."/>
            <person name="Whittaker C.A."/>
            <person name="Chang J.L."/>
            <person name="Cuomo C.A."/>
            <person name="Dewar K."/>
            <person name="FitzGerald M.G."/>
            <person name="Yang X."/>
            <person name="Allen N.R."/>
            <person name="Anderson S."/>
            <person name="Asakawa T."/>
            <person name="Blechschmidt K."/>
            <person name="Bloom T."/>
            <person name="Borowsky M.L."/>
            <person name="Butler J."/>
            <person name="Cook A."/>
            <person name="Corum B."/>
            <person name="DeArellano K."/>
            <person name="DeCaprio D."/>
            <person name="Dooley K.T."/>
            <person name="Dorris L. III"/>
            <person name="Engels R."/>
            <person name="Gloeckner G."/>
            <person name="Hafez N."/>
            <person name="Hagopian D.S."/>
            <person name="Hall J.L."/>
            <person name="Ishikawa S.K."/>
            <person name="Jaffe D.B."/>
            <person name="Kamat A."/>
            <person name="Kudoh J."/>
            <person name="Lehmann R."/>
            <person name="Lokitsang T."/>
            <person name="Macdonald P."/>
            <person name="Major J.E."/>
            <person name="Matthews C.D."/>
            <person name="Mauceli E."/>
            <person name="Menzel U."/>
            <person name="Mihalev A.H."/>
            <person name="Minoshima S."/>
            <person name="Murayama Y."/>
            <person name="Naylor J.W."/>
            <person name="Nicol R."/>
            <person name="Nguyen C."/>
            <person name="O'Leary S.B."/>
            <person name="O'Neill K."/>
            <person name="Parker S.C.J."/>
            <person name="Polley A."/>
            <person name="Raymond C.K."/>
            <person name="Reichwald K."/>
            <person name="Rodriguez J."/>
            <person name="Sasaki T."/>
            <person name="Schilhabel M."/>
            <person name="Siddiqui R."/>
            <person name="Smith C.L."/>
            <person name="Sneddon T.P."/>
            <person name="Talamas J.A."/>
            <person name="Tenzin P."/>
            <person name="Topham K."/>
            <person name="Venkataraman V."/>
            <person name="Wen G."/>
            <person name="Yamazaki S."/>
            <person name="Young S.K."/>
            <person name="Zeng Q."/>
            <person name="Zimmer A.R."/>
            <person name="Rosenthal A."/>
            <person name="Birren B.W."/>
            <person name="Platzer M."/>
            <person name="Shimizu N."/>
            <person name="Lander E.S."/>
        </authorList>
    </citation>
    <scope>NUCLEOTIDE SEQUENCE [LARGE SCALE GENOMIC DNA]</scope>
</reference>
<reference key="8">
    <citation type="journal article" date="2004" name="Genome Res.">
        <title>The status, quality, and expansion of the NIH full-length cDNA project: the Mammalian Gene Collection (MGC).</title>
        <authorList>
            <consortium name="The MGC Project Team"/>
        </authorList>
    </citation>
    <scope>NUCLEOTIDE SEQUENCE [LARGE SCALE MRNA] OF 799-1630 (ISOFORM 1)</scope>
    <scope>NUCLEOTIDE SEQUENCE [LARGE SCALE MRNA] OF 1206-1630 (ISOFORM 3)</scope>
    <source>
        <tissue>Lung carcinoma</tissue>
        <tissue>Neuroblastoma</tissue>
    </source>
</reference>
<reference key="9">
    <citation type="journal article" date="2000" name="Mol. Cell. Biol.">
        <title>Human scribble (Vartul) is targeted for ubiquitin-mediated degradation by the high-risk papillomavirus E6 proteins and the E6AP ubiquitin-protein ligase.</title>
        <authorList>
            <person name="Nakagawa S."/>
            <person name="Huibregtse J.M."/>
        </authorList>
    </citation>
    <scope>INTERACTION WITH UBE3A AND HPV E6</scope>
    <scope>UBIQUITINATION</scope>
    <scope>SUBCELLULAR LOCATION</scope>
</reference>
<reference key="10">
    <citation type="journal article" date="2004" name="Anal. Chem.">
        <title>Robust phosphoproteomic profiling of tyrosine phosphorylation sites from human T cells using immobilized metal affinity chromatography and tandem mass spectrometry.</title>
        <authorList>
            <person name="Brill L.M."/>
            <person name="Salomon A.R."/>
            <person name="Ficarro S.B."/>
            <person name="Mukherji M."/>
            <person name="Stettler-Gill M."/>
            <person name="Peters E.C."/>
        </authorList>
    </citation>
    <scope>PHOSPHORYLATION [LARGE SCALE ANALYSIS] AT SER-1220</scope>
    <scope>IDENTIFICATION BY MASS SPECTROMETRY [LARGE SCALE ANALYSIS]</scope>
    <source>
        <tissue>Leukemic T-cell</tissue>
    </source>
</reference>
<reference key="11">
    <citation type="journal article" date="2004" name="Curr. Biol.">
        <title>Mammalian Scribble forms a tight complex with the betaPIX exchange factor.</title>
        <authorList>
            <person name="Audebert S."/>
            <person name="Navarro C."/>
            <person name="Nourry C."/>
            <person name="Chasserot-Golaz S."/>
            <person name="Lecine P."/>
            <person name="Bellaiche Y."/>
            <person name="Dupont J.-L."/>
            <person name="Premont R.T."/>
            <person name="Sempere C."/>
            <person name="Strub J.-M."/>
            <person name="Van Dorsselaer A."/>
            <person name="Vitale N."/>
            <person name="Borg J.-P."/>
        </authorList>
    </citation>
    <scope>FUNCTION</scope>
    <scope>INTERACTION WITH ARHGEF7 AND GIT1</scope>
    <scope>SUBCELLULAR LOCATION</scope>
    <scope>MUTAGENESIS OF PRO-305</scope>
</reference>
<reference key="12">
    <citation type="journal article" date="2005" name="EMBO J.">
        <title>Thyrotropin receptor trafficking relies on the hScrib-betaPIX-GIT1-ARF6 pathway.</title>
        <authorList>
            <person name="Lahuna O."/>
            <person name="Quellari M."/>
            <person name="Achard C."/>
            <person name="Nola S."/>
            <person name="Meduri G."/>
            <person name="Navarro C."/>
            <person name="Vitale N."/>
            <person name="Borg J.-P."/>
            <person name="Misrahi M."/>
        </authorList>
    </citation>
    <scope>FUNCTION</scope>
    <scope>INTERACTION WITH TSHR</scope>
</reference>
<reference key="13">
    <citation type="journal article" date="2005" name="FEBS Lett.">
        <title>hScrib interacts with ZO-2 at the cell-cell junctions of epithelial cells.</title>
        <authorList>
            <person name="Metais J.-Y."/>
            <person name="Navarro C."/>
            <person name="Santoni M.-J."/>
            <person name="Audebert S."/>
            <person name="Borg J.-P."/>
        </authorList>
    </citation>
    <scope>INTERACTION WITH TJP2</scope>
</reference>
<reference key="14">
    <citation type="journal article" date="2005" name="FEBS Lett.">
        <title>The tumor suppressor Scrib selectively interacts with specific members of the zyxin family of proteins.</title>
        <authorList>
            <person name="Petit M.M.R."/>
            <person name="Crombez K.R.M.O."/>
            <person name="Vervenne H.B.V.K."/>
            <person name="Weyns N."/>
            <person name="Van de Ven W.J.M."/>
        </authorList>
    </citation>
    <scope>INTERACTION WITH TRIP6</scope>
</reference>
<reference key="15">
    <citation type="journal article" date="2005" name="J. Cell Biol.">
        <title>The mammalian Scribble polarity protein regulates epithelial cell adhesion and migration through E-cadherin.</title>
        <authorList>
            <person name="Qin Y."/>
            <person name="Capaldo C."/>
            <person name="Gumbiner B.M."/>
            <person name="Macara I.G."/>
        </authorList>
    </citation>
    <scope>FUNCTION IN CELL ADHESION</scope>
</reference>
<reference key="16">
    <citation type="journal article" date="2006" name="Cancer Sci.">
        <title>Human homolog of Drosophila tumor suppressor Scribble negatively regulates cell-cycle progression from G1 to S phase by localizing at the basolateral membrane in epithelial cells.</title>
        <authorList>
            <person name="Nagasaka K."/>
            <person name="Nakagawa S."/>
            <person name="Yano T."/>
            <person name="Takizawa S."/>
            <person name="Matsumoto Y."/>
            <person name="Tsuruga T."/>
            <person name="Nakagawa K."/>
            <person name="Minaguchi T."/>
            <person name="Oda K."/>
            <person name="Hiraike-Wada O."/>
            <person name="Ooishi H."/>
            <person name="Yasugi T."/>
            <person name="Taketani Y."/>
        </authorList>
    </citation>
    <scope>FUNCTION IN CELL PROLIFERATION</scope>
    <scope>SUBCELLULAR LOCATION</scope>
</reference>
<reference key="17">
    <citation type="journal article" date="2006" name="Cell">
        <title>Global, in vivo, and site-specific phosphorylation dynamics in signaling networks.</title>
        <authorList>
            <person name="Olsen J.V."/>
            <person name="Blagoev B."/>
            <person name="Gnad F."/>
            <person name="Macek B."/>
            <person name="Kumar C."/>
            <person name="Mortensen P."/>
            <person name="Mann M."/>
        </authorList>
    </citation>
    <scope>PHOSPHORYLATION [LARGE SCALE ANALYSIS] AT SER-853; SER-1306; SER-1309 AND SER-1378</scope>
    <scope>IDENTIFICATION BY MASS SPECTROMETRY [LARGE SCALE ANALYSIS]</scope>
    <source>
        <tissue>Cervix carcinoma</tissue>
    </source>
</reference>
<reference key="18">
    <citation type="journal article" date="2006" name="Genes Cells">
        <title>Human scribble, a novel tumor suppressor identified as a target of high-risk HPV E6 for ubiquitin-mediated degradation, interacts with adenomatous polyposis coli.</title>
        <authorList>
            <person name="Takizawa S."/>
            <person name="Nagasaka K."/>
            <person name="Nakagawa S."/>
            <person name="Yano T."/>
            <person name="Nakagawa K."/>
            <person name="Yasugi T."/>
            <person name="Takeuchi T."/>
            <person name="Kanda T."/>
            <person name="Huibregtse J.M."/>
            <person name="Akiyama T."/>
            <person name="Taketani Y."/>
        </authorList>
    </citation>
    <scope>INTERACTION WITH APC</scope>
    <scope>SUBCELLULAR LOCATION</scope>
</reference>
<reference key="19">
    <citation type="journal article" date="2008" name="Cell">
        <title>Deregulation of scribble promotes mammary tumorigenesis and reveals a role for cell polarity in carcinoma.</title>
        <authorList>
            <person name="Zhan L."/>
            <person name="Rosenberg A."/>
            <person name="Bergami K.C."/>
            <person name="Yu M."/>
            <person name="Xuan Z."/>
            <person name="Jaffe A.B."/>
            <person name="Allred C."/>
            <person name="Muthuswamy S.K."/>
        </authorList>
    </citation>
    <scope>FUNCTION IN APOPTOSIS</scope>
    <scope>SUBCELLULAR LOCATION</scope>
    <scope>MUTAGENESIS OF PRO-305</scope>
</reference>
<reference key="20">
    <citation type="journal article" date="2008" name="Hum. Mol. Genet.">
        <title>Scrib regulates PAK activity during the cell migration process.</title>
        <authorList>
            <person name="Nola S."/>
            <person name="Sebbagh M."/>
            <person name="Marchetto S."/>
            <person name="Osmani N."/>
            <person name="Nourry C."/>
            <person name="Audebert S."/>
            <person name="Navarro C."/>
            <person name="Rachel R."/>
            <person name="Montcouquiol M."/>
            <person name="Sans N."/>
            <person name="Etienne-Manneville S."/>
            <person name="Borg J.-P."/>
            <person name="Santoni M.-J."/>
        </authorList>
    </citation>
    <scope>FUNCTION IN CELL MIGRATION</scope>
    <scope>INTERACTION WITH PAK1 AND PAK2</scope>
</reference>
<reference key="21">
    <citation type="journal article" date="2008" name="J. Proteome Res.">
        <title>Combining protein-based IMAC, peptide-based IMAC, and MudPIT for efficient phosphoproteomic analysis.</title>
        <authorList>
            <person name="Cantin G.T."/>
            <person name="Yi W."/>
            <person name="Lu B."/>
            <person name="Park S.K."/>
            <person name="Xu T."/>
            <person name="Lee J.-D."/>
            <person name="Yates J.R. III"/>
        </authorList>
    </citation>
    <scope>PHOSPHORYLATION [LARGE SCALE ANALYSIS] AT SER-1475 AND SER-1591</scope>
    <scope>IDENTIFICATION BY MASS SPECTROMETRY [LARGE SCALE ANALYSIS]</scope>
    <source>
        <tissue>Cervix carcinoma</tissue>
    </source>
</reference>
<reference key="22">
    <citation type="journal article" date="2008" name="Oncogene">
        <title>Loss of human Scribble cooperates with H-Ras to promote cell invasion through deregulation of MAPK signalling.</title>
        <authorList>
            <person name="Dow L.E."/>
            <person name="Elsum I.A."/>
            <person name="King C.L."/>
            <person name="Kinross K.M."/>
            <person name="Richardson H.E."/>
            <person name="Humbert P.O."/>
        </authorList>
    </citation>
    <scope>FUNCTION</scope>
</reference>
<reference key="23">
    <citation type="journal article" date="2008" name="Cell. Microbiol.">
        <title>Tick-borne encephalitis virus NS5 associates with membrane protein scribble and impairs interferon-stimulated JAK-STAT signalling.</title>
        <authorList>
            <person name="Werme K."/>
            <person name="Wigerius M."/>
            <person name="Johansson M."/>
        </authorList>
    </citation>
    <scope>INTERACTION WITH TICK-BORNE ENCEPHALITIS VIRUS RNA-DIRECTED RNA POLYMERASE NS5</scope>
</reference>
<reference key="24">
    <citation type="journal article" date="2008" name="Proc. Natl. Acad. Sci. U.S.A.">
        <title>A quantitative atlas of mitotic phosphorylation.</title>
        <authorList>
            <person name="Dephoure N."/>
            <person name="Zhou C."/>
            <person name="Villen J."/>
            <person name="Beausoleil S.A."/>
            <person name="Bakalarski C.E."/>
            <person name="Elledge S.J."/>
            <person name="Gygi S.P."/>
        </authorList>
    </citation>
    <scope>PHOSPHORYLATION [LARGE SCALE ANALYSIS] AT THR-826; SER-939; SER-1223; SER-1232; SER-1306; SER-1309; THR-1342; SER-1348; SER-1437; SER-1547 AND SER-1591</scope>
    <scope>IDENTIFICATION BY MASS SPECTROMETRY [LARGE SCALE ANALYSIS]</scope>
    <source>
        <tissue>Cervix carcinoma</tissue>
    </source>
</reference>
<reference key="25">
    <citation type="journal article" date="2009" name="Anal. Chem.">
        <title>Lys-N and trypsin cover complementary parts of the phosphoproteome in a refined SCX-based approach.</title>
        <authorList>
            <person name="Gauci S."/>
            <person name="Helbig A.O."/>
            <person name="Slijper M."/>
            <person name="Krijgsveld J."/>
            <person name="Heck A.J."/>
            <person name="Mohammed S."/>
        </authorList>
    </citation>
    <scope>IDENTIFICATION BY MASS SPECTROMETRY [LARGE SCALE ANALYSIS]</scope>
</reference>
<reference key="26">
    <citation type="journal article" date="2009" name="FEBS Lett.">
        <title>MCC, a new interacting protein for Scrib, is required for cell migration in epithelial cells.</title>
        <authorList>
            <person name="Arnaud C."/>
            <person name="Sebbagh M."/>
            <person name="Nola S."/>
            <person name="Audebert S."/>
            <person name="Bidaut G."/>
            <person name="Hermant A."/>
            <person name="Gayet O."/>
            <person name="Dusetti N.J."/>
            <person name="Ollendorff V."/>
            <person name="Santoni M.J."/>
            <person name="Borg J.P."/>
            <person name="Lecine P."/>
        </authorList>
    </citation>
    <scope>INTERACTION WITH MCC</scope>
</reference>
<reference key="27">
    <citation type="journal article" date="2009" name="Mol. Biol. Cell">
        <title>Vimentin regulates scribble activity by protecting it from proteasomal degradation.</title>
        <authorList>
            <person name="Phua D.C."/>
            <person name="Humbert P.O."/>
            <person name="Hunziker W."/>
        </authorList>
    </citation>
    <scope>INTERACTION WITH VIM</scope>
    <scope>SUBCELLULAR LOCATION</scope>
</reference>
<reference key="28">
    <citation type="journal article" date="2009" name="Mol. Cell. Proteomics">
        <title>Large-scale proteomics analysis of the human kinome.</title>
        <authorList>
            <person name="Oppermann F.S."/>
            <person name="Gnad F."/>
            <person name="Olsen J.V."/>
            <person name="Hornberger R."/>
            <person name="Greff Z."/>
            <person name="Keri G."/>
            <person name="Mann M."/>
            <person name="Daub H."/>
        </authorList>
    </citation>
    <scope>PHOSPHORYLATION [LARGE SCALE ANALYSIS] AT SER-1348 AND SER-1448</scope>
    <scope>IDENTIFICATION BY MASS SPECTROMETRY [LARGE SCALE ANALYSIS]</scope>
</reference>
<reference key="29">
    <citation type="journal article" date="2009" name="Sci. Signal.">
        <title>Quantitative phosphoproteomic analysis of T cell receptor signaling reveals system-wide modulation of protein-protein interactions.</title>
        <authorList>
            <person name="Mayya V."/>
            <person name="Lundgren D.H."/>
            <person name="Hwang S.-I."/>
            <person name="Rezaul K."/>
            <person name="Wu L."/>
            <person name="Eng J.K."/>
            <person name="Rodionov V."/>
            <person name="Han D.K."/>
        </authorList>
    </citation>
    <scope>PHOSPHORYLATION [LARGE SCALE ANALYSIS] AT THR-826; SER-1220; THR-1342; SER-1348; SER-1475; SER-1547 AND SER-1591</scope>
    <scope>IDENTIFICATION BY MASS SPECTROMETRY [LARGE SCALE ANALYSIS]</scope>
    <source>
        <tissue>Leukemic T-cell</tissue>
    </source>
</reference>
<reference key="30">
    <citation type="journal article" date="2010" name="Sci. Signal.">
        <title>Quantitative phosphoproteomics reveals widespread full phosphorylation site occupancy during mitosis.</title>
        <authorList>
            <person name="Olsen J.V."/>
            <person name="Vermeulen M."/>
            <person name="Santamaria A."/>
            <person name="Kumar C."/>
            <person name="Miller M.L."/>
            <person name="Jensen L.J."/>
            <person name="Gnad F."/>
            <person name="Cox J."/>
            <person name="Jensen T.S."/>
            <person name="Nigg E.A."/>
            <person name="Brunak S."/>
            <person name="Mann M."/>
        </authorList>
    </citation>
    <scope>PHOSPHORYLATION [LARGE SCALE ANALYSIS] AT THR-826; SER-835; SER-853; SER-939; SER-1140; SER-1220; SER-1232; THR-1342; SER-1348; SER-1378; SER-1448; SER-1475; SER-1486 AND SER-1591</scope>
    <scope>IDENTIFICATION BY MASS SPECTROMETRY [LARGE SCALE ANALYSIS]</scope>
    <source>
        <tissue>Cervix carcinoma</tissue>
    </source>
</reference>
<reference key="31">
    <citation type="journal article" date="2011" name="BMC Syst. Biol.">
        <title>Initial characterization of the human central proteome.</title>
        <authorList>
            <person name="Burkard T.R."/>
            <person name="Planyavsky M."/>
            <person name="Kaupe I."/>
            <person name="Breitwieser F.P."/>
            <person name="Buerckstuemmer T."/>
            <person name="Bennett K.L."/>
            <person name="Superti-Furga G."/>
            <person name="Colinge J."/>
        </authorList>
    </citation>
    <scope>IDENTIFICATION BY MASS SPECTROMETRY [LARGE SCALE ANALYSIS]</scope>
</reference>
<reference key="32">
    <citation type="journal article" date="2011" name="J. Virol.">
        <title>The avian influenza virus NS1 ESEV PDZ binding motif associates with Dlg1 and Scribble to disrupt cellular tight junctions.</title>
        <authorList>
            <person name="Golebiewski L."/>
            <person name="Liu H."/>
            <person name="Javier R.T."/>
            <person name="Rice A.P."/>
        </authorList>
    </citation>
    <scope>INTERACTION WITH INFLUENZA A NS1 (MICROBIAL INFECTION)</scope>
    <scope>SUBCELLULAR LOCATION</scope>
</reference>
<reference key="33">
    <citation type="journal article" date="2011" name="Sci. Signal.">
        <title>System-wide temporal characterization of the proteome and phosphoproteome of human embryonic stem cell differentiation.</title>
        <authorList>
            <person name="Rigbolt K.T."/>
            <person name="Prokhorova T.A."/>
            <person name="Akimov V."/>
            <person name="Henningsen J."/>
            <person name="Johansen P.T."/>
            <person name="Kratchmarova I."/>
            <person name="Kassem M."/>
            <person name="Mann M."/>
            <person name="Olsen J.V."/>
            <person name="Blagoev B."/>
        </authorList>
    </citation>
    <scope>PHOSPHORYLATION [LARGE SCALE ANALYSIS] AT SER-688; THR-689; SER-1220; SER-1309 AND SER-1378</scope>
    <scope>IDENTIFICATION BY MASS SPECTROMETRY [LARGE SCALE ANALYSIS]</scope>
</reference>
<reference key="34">
    <citation type="journal article" date="2012" name="Biochim. Biophys. Acta">
        <title>The PDZ-binding motif of MCC is phosphorylated at position -1 and controls lamellipodia formation in colon epithelial cells.</title>
        <authorList>
            <person name="Pangon L."/>
            <person name="Van Kralingen C."/>
            <person name="Abas M."/>
            <person name="Daly R.J."/>
            <person name="Musgrove E.A."/>
            <person name="Kohonen-Corish M.R."/>
        </authorList>
    </citation>
    <scope>INTERACTION WITH MCC</scope>
    <scope>SUBCELLULAR LOCATION</scope>
</reference>
<reference key="35">
    <citation type="journal article" date="2013" name="J. Proteome Res.">
        <title>Toward a comprehensive characterization of a human cancer cell phosphoproteome.</title>
        <authorList>
            <person name="Zhou H."/>
            <person name="Di Palma S."/>
            <person name="Preisinger C."/>
            <person name="Peng M."/>
            <person name="Polat A.N."/>
            <person name="Heck A.J."/>
            <person name="Mohammed S."/>
        </authorList>
    </citation>
    <scope>PHOSPHORYLATION [LARGE SCALE ANALYSIS] AT SER-37; THR-378; THR-475; SER-504; SER-708; SER-853; SER-875; SER-1140; SER-1220; SER-1223; SER-1226; SER-1232; SER-1276; SER-1279; SER-1306; SER-1309; SER-1348; SER-1378; SER-1448; SER-1475; SER-1486; SER-1508; SER-1541; SER-1561 AND SER-1591</scope>
    <scope>IDENTIFICATION BY MASS SPECTROMETRY [LARGE SCALE ANALYSIS]</scope>
    <source>
        <tissue>Cervix carcinoma</tissue>
        <tissue>Erythroleukemia</tissue>
    </source>
</reference>
<reference key="36">
    <citation type="journal article" date="2014" name="J. Proteomics">
        <title>An enzyme assisted RP-RPLC approach for in-depth analysis of human liver phosphoproteome.</title>
        <authorList>
            <person name="Bian Y."/>
            <person name="Song C."/>
            <person name="Cheng K."/>
            <person name="Dong M."/>
            <person name="Wang F."/>
            <person name="Huang J."/>
            <person name="Sun D."/>
            <person name="Wang L."/>
            <person name="Ye M."/>
            <person name="Zou H."/>
        </authorList>
    </citation>
    <scope>PHOSPHORYLATION [LARGE SCALE ANALYSIS] AT SER-504; SER-764; SER-853; SER-1140; SER-1220; SER-1295; SER-1298; SER-1306; SER-1309; SER-1378; SER-1445; SER-1448; SER-1486; SER-1508; THR-1545 AND SER-1591</scope>
    <scope>IDENTIFICATION BY MASS SPECTROMETRY [LARGE SCALE ANALYSIS]</scope>
    <source>
        <tissue>Liver</tissue>
    </source>
</reference>
<reference key="37">
    <citation type="journal article" date="2016" name="Nat. Chem. Biol.">
        <title>ZDHHC7-mediated S-palmitoylation of Scribble regulates cell polarity.</title>
        <authorList>
            <person name="Chen B."/>
            <person name="Zheng B."/>
            <person name="DeRan M."/>
            <person name="Jarugumilli G.K."/>
            <person name="Fu J."/>
            <person name="Brooks Y.S."/>
            <person name="Wu X."/>
        </authorList>
    </citation>
    <scope>FUNCTION</scope>
    <scope>SUBCELLULAR LOCATION</scope>
    <scope>PALMITOYLATION</scope>
    <scope>MUTAGENESIS OF CYS-4; CYS-10; CYS-22 AND PRO-305</scope>
</reference>
<reference key="38">
    <citation type="journal article" date="2017" name="Sci. Rep.">
        <title>Loss of DLG5 promotes breast cancer malignancy by inhibiting the Hippo signaling pathway.</title>
        <authorList>
            <person name="Liu J."/>
            <person name="Li J."/>
            <person name="Li P."/>
            <person name="Wang Y."/>
            <person name="Liang Z."/>
            <person name="Jiang Y."/>
            <person name="Li J."/>
            <person name="Feng C."/>
            <person name="Wang R."/>
            <person name="Chen H."/>
            <person name="Zhou C."/>
            <person name="Zhang J."/>
            <person name="Yang J."/>
            <person name="Liu P."/>
        </authorList>
    </citation>
    <scope>INTERACTION WITH DLG5; STK4 AND LATS1</scope>
    <scope>SUBCELLULAR LOCATION</scope>
</reference>
<reference key="39">
    <citation type="journal article" date="2021" name="Cell Chem. Biol.">
        <title>Scribble sub-cellular localization modulates recruitment of YES1 to regulate YAP1 phosphorylation.</title>
        <authorList>
            <person name="Zhao D."/>
            <person name="Yin Z."/>
            <person name="Soellner M.B."/>
            <person name="Martin B.R."/>
        </authorList>
    </citation>
    <scope>INTERACTION WITH YES1</scope>
    <scope>MUTAGENESIS OF PRO-305</scope>
</reference>
<reference key="40">
    <citation type="submission" date="2005-11" db="PDB data bank">
        <title>Solution structure of the first, second and fourth PDZ domain of human scribble (KIAA0147 protein).</title>
        <authorList>
            <consortium name="RIKEN structural genomics initiative (RSGI)"/>
        </authorList>
    </citation>
    <scope>STRUCTURE BY NMR OF 718-814; 860-951 AND 1096-1193</scope>
</reference>
<reference key="41">
    <citation type="journal article" date="2012" name="Hum. Mutat.">
        <title>Mutations in the planar cell polarity genes CELSR1 and SCRIB are associated with the severe neural tube defect craniorachischisis.</title>
        <authorList>
            <person name="Robinson A."/>
            <person name="Escuin S."/>
            <person name="Doudney K."/>
            <person name="Vekemans M."/>
            <person name="Stevenson R.E."/>
            <person name="Greene N.D."/>
            <person name="Copp A.J."/>
            <person name="Stanier P."/>
        </authorList>
    </citation>
    <scope>VARIANTS NTD SER-454 AND GLN-1535</scope>
    <scope>CHARACTERIZATION OF VARIANTS NTD SER-454 AND GLN-1535</scope>
</reference>
<keyword id="KW-0002">3D-structure</keyword>
<keyword id="KW-0025">Alternative splicing</keyword>
<keyword id="KW-0965">Cell junction</keyword>
<keyword id="KW-1003">Cell membrane</keyword>
<keyword id="KW-0966">Cell projection</keyword>
<keyword id="KW-0175">Coiled coil</keyword>
<keyword id="KW-0963">Cytoplasm</keyword>
<keyword id="KW-0217">Developmental protein</keyword>
<keyword id="KW-0221">Differentiation</keyword>
<keyword id="KW-0225">Disease variant</keyword>
<keyword id="KW-0433">Leucine-rich repeat</keyword>
<keyword id="KW-0449">Lipoprotein</keyword>
<keyword id="KW-0472">Membrane</keyword>
<keyword id="KW-0564">Palmitate</keyword>
<keyword id="KW-0597">Phosphoprotein</keyword>
<keyword id="KW-1267">Proteomics identification</keyword>
<keyword id="KW-1185">Reference proteome</keyword>
<keyword id="KW-0677">Repeat</keyword>
<keyword id="KW-0770">Synapse</keyword>
<keyword id="KW-0832">Ubl conjugation</keyword>
<organism>
    <name type="scientific">Homo sapiens</name>
    <name type="common">Human</name>
    <dbReference type="NCBI Taxonomy" id="9606"/>
    <lineage>
        <taxon>Eukaryota</taxon>
        <taxon>Metazoa</taxon>
        <taxon>Chordata</taxon>
        <taxon>Craniata</taxon>
        <taxon>Vertebrata</taxon>
        <taxon>Euteleostomi</taxon>
        <taxon>Mammalia</taxon>
        <taxon>Eutheria</taxon>
        <taxon>Euarchontoglires</taxon>
        <taxon>Primates</taxon>
        <taxon>Haplorrhini</taxon>
        <taxon>Catarrhini</taxon>
        <taxon>Hominidae</taxon>
        <taxon>Homo</taxon>
    </lineage>
</organism>
<feature type="chain" id="PRO_0000188303" description="Protein scribble homolog">
    <location>
        <begin position="1"/>
        <end position="1655"/>
    </location>
</feature>
<feature type="repeat" description="LRR 1">
    <location>
        <begin position="37"/>
        <end position="58"/>
    </location>
</feature>
<feature type="repeat" description="LRR 2">
    <location>
        <begin position="60"/>
        <end position="81"/>
    </location>
</feature>
<feature type="repeat" description="LRR 3">
    <location>
        <begin position="83"/>
        <end position="104"/>
    </location>
</feature>
<feature type="repeat" description="LRR 4">
    <location>
        <begin position="106"/>
        <end position="127"/>
    </location>
</feature>
<feature type="repeat" description="LRR 5">
    <location>
        <begin position="129"/>
        <end position="150"/>
    </location>
</feature>
<feature type="repeat" description="LRR 6">
    <location>
        <begin position="152"/>
        <end position="174"/>
    </location>
</feature>
<feature type="repeat" description="LRR 7">
    <location>
        <begin position="175"/>
        <end position="197"/>
    </location>
</feature>
<feature type="repeat" description="LRR 8">
    <location>
        <begin position="198"/>
        <end position="219"/>
    </location>
</feature>
<feature type="repeat" description="LRR 9">
    <location>
        <begin position="221"/>
        <end position="243"/>
    </location>
</feature>
<feature type="repeat" description="LRR 10">
    <location>
        <begin position="244"/>
        <end position="265"/>
    </location>
</feature>
<feature type="repeat" description="LRR 11">
    <location>
        <begin position="267"/>
        <end position="288"/>
    </location>
</feature>
<feature type="repeat" description="LRR 12">
    <location>
        <begin position="290"/>
        <end position="312"/>
    </location>
</feature>
<feature type="repeat" description="LRR 13">
    <location>
        <begin position="313"/>
        <end position="334"/>
    </location>
</feature>
<feature type="repeat" description="LRR 14">
    <location>
        <begin position="336"/>
        <end position="357"/>
    </location>
</feature>
<feature type="repeat" description="LRR 15">
    <location>
        <begin position="359"/>
        <end position="381"/>
    </location>
</feature>
<feature type="repeat" description="LRR 16">
    <location>
        <begin position="382"/>
        <end position="402"/>
    </location>
</feature>
<feature type="domain" description="PDZ 1" evidence="4">
    <location>
        <begin position="728"/>
        <end position="815"/>
    </location>
</feature>
<feature type="domain" description="PDZ 2" evidence="4">
    <location>
        <begin position="862"/>
        <end position="950"/>
    </location>
</feature>
<feature type="domain" description="PDZ 3" evidence="4">
    <location>
        <begin position="1004"/>
        <end position="1093"/>
    </location>
</feature>
<feature type="domain" description="PDZ 4" evidence="4">
    <location>
        <begin position="1100"/>
        <end position="1194"/>
    </location>
</feature>
<feature type="region of interest" description="Sufficient for targeting to adherens junction and to inhibit cell proliferation">
    <location>
        <begin position="1"/>
        <end position="818"/>
    </location>
</feature>
<feature type="region of interest" description="Disordered" evidence="5">
    <location>
        <begin position="417"/>
        <end position="440"/>
    </location>
</feature>
<feature type="region of interest" description="Disordered" evidence="5">
    <location>
        <begin position="459"/>
        <end position="606"/>
    </location>
</feature>
<feature type="region of interest" description="Disordered" evidence="5">
    <location>
        <begin position="628"/>
        <end position="702"/>
    </location>
</feature>
<feature type="region of interest" description="Interaction with ARHGEF7" evidence="7">
    <location>
        <begin position="717"/>
        <end position="1229"/>
    </location>
</feature>
<feature type="region of interest" description="Required for interaction with VIM" evidence="20">
    <location>
        <begin position="728"/>
        <end position="1194"/>
    </location>
</feature>
<feature type="region of interest" description="Disordered" evidence="5">
    <location>
        <begin position="827"/>
        <end position="853"/>
    </location>
</feature>
<feature type="region of interest" description="Interaction with tick-borne encephalitis virus RNA-directed RNA polymerase NS5" evidence="16">
    <location>
        <begin position="1105"/>
        <end position="1117"/>
    </location>
</feature>
<feature type="region of interest" description="Disordered" evidence="5">
    <location>
        <begin position="1227"/>
        <end position="1246"/>
    </location>
</feature>
<feature type="region of interest" description="Disordered" evidence="5">
    <location>
        <begin position="1277"/>
        <end position="1489"/>
    </location>
</feature>
<feature type="region of interest" description="Disordered" evidence="5">
    <location>
        <begin position="1520"/>
        <end position="1568"/>
    </location>
</feature>
<feature type="region of interest" description="Disordered" evidence="5">
    <location>
        <begin position="1622"/>
        <end position="1655"/>
    </location>
</feature>
<feature type="coiled-coil region" evidence="3">
    <location>
        <begin position="458"/>
        <end position="474"/>
    </location>
</feature>
<feature type="coiled-coil region" evidence="3">
    <location>
        <begin position="656"/>
        <end position="701"/>
    </location>
</feature>
<feature type="coiled-coil region" evidence="3">
    <location>
        <begin position="1379"/>
        <end position="1419"/>
    </location>
</feature>
<feature type="compositionally biased region" description="Basic and acidic residues" evidence="5">
    <location>
        <begin position="479"/>
        <end position="494"/>
    </location>
</feature>
<feature type="compositionally biased region" description="Low complexity" evidence="5">
    <location>
        <begin position="537"/>
        <end position="555"/>
    </location>
</feature>
<feature type="compositionally biased region" description="Acidic residues" evidence="5">
    <location>
        <begin position="556"/>
        <end position="565"/>
    </location>
</feature>
<feature type="compositionally biased region" description="Acidic residues" evidence="5">
    <location>
        <begin position="660"/>
        <end position="694"/>
    </location>
</feature>
<feature type="compositionally biased region" description="Basic and acidic residues" evidence="5">
    <location>
        <begin position="829"/>
        <end position="841"/>
    </location>
</feature>
<feature type="compositionally biased region" description="Basic and acidic residues" evidence="5">
    <location>
        <begin position="1227"/>
        <end position="1242"/>
    </location>
</feature>
<feature type="compositionally biased region" description="Pro residues" evidence="5">
    <location>
        <begin position="1302"/>
        <end position="1311"/>
    </location>
</feature>
<feature type="compositionally biased region" description="Basic and acidic residues" evidence="5">
    <location>
        <begin position="1353"/>
        <end position="1365"/>
    </location>
</feature>
<feature type="compositionally biased region" description="Basic and acidic residues" evidence="5">
    <location>
        <begin position="1383"/>
        <end position="1395"/>
    </location>
</feature>
<feature type="compositionally biased region" description="Low complexity" evidence="5">
    <location>
        <begin position="1409"/>
        <end position="1421"/>
    </location>
</feature>
<feature type="compositionally biased region" description="Acidic residues" evidence="5">
    <location>
        <begin position="1422"/>
        <end position="1432"/>
    </location>
</feature>
<feature type="compositionally biased region" description="Basic and acidic residues" evidence="5">
    <location>
        <begin position="1461"/>
        <end position="1472"/>
    </location>
</feature>
<feature type="compositionally biased region" description="Basic and acidic residues" evidence="5">
    <location>
        <begin position="1524"/>
        <end position="1537"/>
    </location>
</feature>
<feature type="modified residue" description="Phosphoserine" evidence="40">
    <location>
        <position position="37"/>
    </location>
</feature>
<feature type="modified residue" description="Phosphothreonine" evidence="40">
    <location>
        <position position="378"/>
    </location>
</feature>
<feature type="modified residue" description="Phosphothreonine" evidence="40">
    <location>
        <position position="475"/>
    </location>
</feature>
<feature type="modified residue" description="Phosphoserine" evidence="40 41">
    <location>
        <position position="504"/>
    </location>
</feature>
<feature type="modified residue" description="Phosphoserine" evidence="39">
    <location>
        <position position="688"/>
    </location>
</feature>
<feature type="modified residue" description="Phosphothreonine" evidence="39">
    <location>
        <position position="689"/>
    </location>
</feature>
<feature type="modified residue" description="Phosphoserine" evidence="40">
    <location>
        <position position="708"/>
    </location>
</feature>
<feature type="modified residue" description="Phosphoserine" evidence="41">
    <location>
        <position position="764"/>
    </location>
</feature>
<feature type="modified residue" description="Phosphothreonine" evidence="35 37 38">
    <location>
        <position position="826"/>
    </location>
</feature>
<feature type="modified residue" description="Phosphoserine" evidence="38">
    <location>
        <position position="835"/>
    </location>
</feature>
<feature type="modified residue" description="Phosphoserine" evidence="33 38 40 41">
    <location>
        <position position="853"/>
    </location>
</feature>
<feature type="modified residue" description="Phosphoserine" evidence="40">
    <location>
        <position position="875"/>
    </location>
</feature>
<feature type="modified residue" description="Phosphoserine" evidence="35 38">
    <location>
        <position position="939"/>
    </location>
</feature>
<feature type="modified residue" description="Phosphoserine" evidence="38 40 41">
    <location>
        <position position="1140"/>
    </location>
</feature>
<feature type="modified residue" description="Phosphoserine" evidence="32 37 38 39 40 41">
    <location>
        <position position="1220"/>
    </location>
</feature>
<feature type="modified residue" description="Phosphoserine" evidence="35 40">
    <location>
        <position position="1223"/>
    </location>
</feature>
<feature type="modified residue" description="Phosphoserine" evidence="40">
    <location>
        <position position="1226"/>
    </location>
</feature>
<feature type="modified residue" description="Phosphoserine" evidence="35 38 40">
    <location>
        <position position="1232"/>
    </location>
</feature>
<feature type="modified residue" description="Phosphoserine" evidence="40">
    <location>
        <position position="1276"/>
    </location>
</feature>
<feature type="modified residue" description="Phosphoserine" evidence="40">
    <location>
        <position position="1279"/>
    </location>
</feature>
<feature type="modified residue" description="Phosphoserine" evidence="41">
    <location>
        <position position="1295"/>
    </location>
</feature>
<feature type="modified residue" description="Phosphoserine" evidence="41">
    <location>
        <position position="1298"/>
    </location>
</feature>
<feature type="modified residue" description="Phosphoserine" evidence="33 35 40 41">
    <location>
        <position position="1306"/>
    </location>
</feature>
<feature type="modified residue" description="Phosphoserine" evidence="33 35 39 40 41">
    <location>
        <position position="1309"/>
    </location>
</feature>
<feature type="modified residue" description="Phosphothreonine" evidence="35 37 38">
    <location>
        <position position="1342"/>
    </location>
</feature>
<feature type="modified residue" description="Phosphoserine" evidence="35 36 37 38 40">
    <location>
        <position position="1348"/>
    </location>
</feature>
<feature type="modified residue" description="Phosphoserine" evidence="33 38 39 40 41">
    <location>
        <position position="1378"/>
    </location>
</feature>
<feature type="modified residue" description="Phosphoserine" evidence="35">
    <location>
        <position position="1437"/>
    </location>
</feature>
<feature type="modified residue" description="Phosphoserine" evidence="41">
    <location>
        <position position="1445"/>
    </location>
</feature>
<feature type="modified residue" description="Phosphoserine" evidence="36 38 40 41">
    <location>
        <position position="1448"/>
    </location>
</feature>
<feature type="modified residue" description="Phosphoserine" evidence="34 37 38 40">
    <location>
        <position position="1475"/>
    </location>
</feature>
<feature type="modified residue" description="Phosphoserine" evidence="38 40 41">
    <location>
        <position position="1486"/>
    </location>
</feature>
<feature type="modified residue" description="Phosphoserine" evidence="40 41">
    <location>
        <position position="1508"/>
    </location>
</feature>
<feature type="modified residue" description="Phosphoserine" evidence="40">
    <location>
        <position position="1541"/>
    </location>
</feature>
<feature type="modified residue" description="Phosphothreonine" evidence="41">
    <location>
        <position position="1545"/>
    </location>
</feature>
<feature type="modified residue" description="Phosphoserine" evidence="35 37">
    <location>
        <position position="1547"/>
    </location>
</feature>
<feature type="modified residue" description="Phosphoserine" evidence="40">
    <location>
        <position position="1561"/>
    </location>
</feature>
<feature type="modified residue" description="Phosphoserine" evidence="34 35 37 38 40 41">
    <location>
        <position position="1591"/>
    </location>
</feature>
<feature type="splice variant" id="VSP_062396" description="In isoform 2." evidence="30">
    <location>
        <begin position="1"/>
        <end position="81"/>
    </location>
</feature>
<feature type="splice variant" id="VSP_062397" description="In isoform 2 and isoform 1." evidence="30">
    <location>
        <begin position="1566"/>
        <end position="1590"/>
    </location>
</feature>
<feature type="sequence variant" id="VAR_019429" description="In dbSNP:rs6558394." evidence="8 10 28 29">
    <original>P</original>
    <variation>L</variation>
    <location>
        <position position="422"/>
    </location>
</feature>
<feature type="sequence variant" id="VAR_067219" description="In NTD; protein interactions not affected by the mutation; shows reduced protein localization to the cell membrane; dbSNP:rs1302482009." evidence="23">
    <original>P</original>
    <variation>S</variation>
    <location>
        <position position="454"/>
    </location>
</feature>
<feature type="sequence variant" id="VAR_067220" description="In NTD; protein interactions not affected by the mutation; shows reduced protein localization to the cell membrane; dbSNP:rs782428100." evidence="23">
    <original>R</original>
    <variation>Q</variation>
    <location>
        <position position="1535"/>
    </location>
</feature>
<feature type="mutagenesis site" description="Loss of palmitoylation. Loss of palmitoylation, localization to cell-cell junctions and function in epithelial cell polarization and signaling pathways regulation; when associated with S-10." evidence="25">
    <original>C</original>
    <variation>S</variation>
    <location>
        <position position="4"/>
    </location>
</feature>
<feature type="mutagenesis site" description="Loss of palmitoylation. Loss of palmitoylation, localization to cell-cell junctions and function in epithelial cell polarization and signaling pathways regulation; when associated with S-4." evidence="25">
    <original>C</original>
    <variation>S</variation>
    <location>
        <position position="10"/>
    </location>
</feature>
<feature type="mutagenesis site" description="No effect on palmitoylation." evidence="25">
    <original>C</original>
    <variation>S</variation>
    <location>
        <position position="22"/>
    </location>
</feature>
<feature type="mutagenesis site" description="Decreased palmitoylation. Loss of localization at the plasma membrane. Loss of targeting to cell-cell junctions. Alters interaction with TJP2. Loss of pro-apoptotic function. Loss of function in epithelial cell polarization and signaling pathways regulation. Abolishes interaction with YES1 in the closed conformation and instead facilitates SCRIB interaction with YES1 in an open conformation." evidence="7 10 19 25 27">
    <original>P</original>
    <variation>L</variation>
    <location>
        <position position="305"/>
    </location>
</feature>
<feature type="mutagenesis site" description="Alters interaction with LPP." evidence="8">
    <original>LG</original>
    <variation>AE</variation>
    <location>
        <begin position="738"/>
        <end position="739"/>
    </location>
</feature>
<feature type="mutagenesis site" description="Loss of anti-proliferative activity.">
    <original>L</original>
    <variation>R</variation>
    <location>
        <position position="738"/>
    </location>
</feature>
<feature type="mutagenesis site" description="Alters interaction with LPP." evidence="8">
    <original>LG</original>
    <variation>AE</variation>
    <location>
        <begin position="872"/>
        <end position="873"/>
    </location>
</feature>
<feature type="mutagenesis site" description="Loss of interaction with LPP and TRIP6." evidence="8">
    <original>LG</original>
    <variation>AE</variation>
    <location>
        <begin position="1014"/>
        <end position="1015"/>
    </location>
</feature>
<feature type="mutagenesis site" description="Alters interaction with LPP." evidence="8">
    <original>LG</original>
    <variation>AE</variation>
    <location>
        <begin position="1111"/>
        <end position="1112"/>
    </location>
</feature>
<feature type="sequence conflict" description="In Ref. 2; AAL38976." evidence="30" ref="2">
    <original>E</original>
    <variation>K</variation>
    <location>
        <position position="1489"/>
    </location>
</feature>
<feature type="strand" evidence="53">
    <location>
        <begin position="710"/>
        <end position="712"/>
    </location>
</feature>
<feature type="strand" evidence="53">
    <location>
        <begin position="715"/>
        <end position="717"/>
    </location>
</feature>
<feature type="strand" evidence="49">
    <location>
        <begin position="725"/>
        <end position="732"/>
    </location>
</feature>
<feature type="strand" evidence="51">
    <location>
        <begin position="734"/>
        <end position="736"/>
    </location>
</feature>
<feature type="strand" evidence="49">
    <location>
        <begin position="740"/>
        <end position="744"/>
    </location>
</feature>
<feature type="strand" evidence="45">
    <location>
        <begin position="751"/>
        <end position="754"/>
    </location>
</feature>
<feature type="strand" evidence="49">
    <location>
        <begin position="757"/>
        <end position="763"/>
    </location>
</feature>
<feature type="strand" evidence="52">
    <location>
        <begin position="765"/>
        <end position="767"/>
    </location>
</feature>
<feature type="helix" evidence="49">
    <location>
        <begin position="768"/>
        <end position="772"/>
    </location>
</feature>
<feature type="strand" evidence="49">
    <location>
        <begin position="779"/>
        <end position="783"/>
    </location>
</feature>
<feature type="helix" evidence="49">
    <location>
        <begin position="793"/>
        <end position="801"/>
    </location>
</feature>
<feature type="strand" evidence="49">
    <location>
        <begin position="805"/>
        <end position="814"/>
    </location>
</feature>
<feature type="strand" evidence="48">
    <location>
        <begin position="815"/>
        <end position="818"/>
    </location>
</feature>
<feature type="helix" evidence="48">
    <location>
        <begin position="820"/>
        <end position="823"/>
    </location>
</feature>
<feature type="strand" evidence="50">
    <location>
        <begin position="860"/>
        <end position="866"/>
    </location>
</feature>
<feature type="strand" evidence="50">
    <location>
        <begin position="874"/>
        <end position="878"/>
    </location>
</feature>
<feature type="strand" evidence="50">
    <location>
        <begin position="892"/>
        <end position="898"/>
    </location>
</feature>
<feature type="helix" evidence="50">
    <location>
        <begin position="902"/>
        <end position="906"/>
    </location>
</feature>
<feature type="strand" evidence="50">
    <location>
        <begin position="914"/>
        <end position="918"/>
    </location>
</feature>
<feature type="helix" evidence="50">
    <location>
        <begin position="928"/>
        <end position="936"/>
    </location>
</feature>
<feature type="strand" evidence="50">
    <location>
        <begin position="940"/>
        <end position="947"/>
    </location>
</feature>
<feature type="strand" evidence="44">
    <location>
        <begin position="997"/>
        <end position="1000"/>
    </location>
</feature>
<feature type="strand" evidence="46">
    <location>
        <begin position="1002"/>
        <end position="1008"/>
    </location>
</feature>
<feature type="strand" evidence="44">
    <location>
        <begin position="1010"/>
        <end position="1012"/>
    </location>
</feature>
<feature type="strand" evidence="46">
    <location>
        <begin position="1016"/>
        <end position="1020"/>
    </location>
</feature>
<feature type="strand" evidence="43">
    <location>
        <begin position="1022"/>
        <end position="1024"/>
    </location>
</feature>
<feature type="turn" evidence="44">
    <location>
        <begin position="1027"/>
        <end position="1030"/>
    </location>
</feature>
<feature type="strand" evidence="44">
    <location>
        <begin position="1031"/>
        <end position="1033"/>
    </location>
</feature>
<feature type="strand" evidence="46">
    <location>
        <begin position="1036"/>
        <end position="1041"/>
    </location>
</feature>
<feature type="strand" evidence="54">
    <location>
        <begin position="1043"/>
        <end position="1045"/>
    </location>
</feature>
<feature type="helix" evidence="46">
    <location>
        <begin position="1046"/>
        <end position="1049"/>
    </location>
</feature>
<feature type="strand" evidence="46">
    <location>
        <begin position="1057"/>
        <end position="1061"/>
    </location>
</feature>
<feature type="helix" evidence="46">
    <location>
        <begin position="1071"/>
        <end position="1078"/>
    </location>
</feature>
<feature type="strand" evidence="46">
    <location>
        <begin position="1080"/>
        <end position="1090"/>
    </location>
</feature>
<feature type="strand" evidence="47">
    <location>
        <begin position="1099"/>
        <end position="1104"/>
    </location>
</feature>
<feature type="strand" evidence="47">
    <location>
        <begin position="1113"/>
        <end position="1117"/>
    </location>
</feature>
<feature type="strand" evidence="42">
    <location>
        <begin position="1119"/>
        <end position="1122"/>
    </location>
</feature>
<feature type="strand" evidence="43">
    <location>
        <begin position="1126"/>
        <end position="1128"/>
    </location>
</feature>
<feature type="helix" evidence="47">
    <location>
        <begin position="1129"/>
        <end position="1131"/>
    </location>
</feature>
<feature type="strand" evidence="47">
    <location>
        <begin position="1134"/>
        <end position="1139"/>
    </location>
</feature>
<feature type="strand" evidence="43">
    <location>
        <begin position="1141"/>
        <end position="1143"/>
    </location>
</feature>
<feature type="helix" evidence="47">
    <location>
        <begin position="1144"/>
        <end position="1148"/>
    </location>
</feature>
<feature type="strand" evidence="47">
    <location>
        <begin position="1156"/>
        <end position="1160"/>
    </location>
</feature>
<feature type="helix" evidence="47">
    <location>
        <begin position="1170"/>
        <end position="1177"/>
    </location>
</feature>
<feature type="strand" evidence="47">
    <location>
        <begin position="1181"/>
        <end position="1189"/>
    </location>
</feature>
<comment type="function">
    <text evidence="1 2 7 13 15 17 18 19 25">Scaffold protein involved in different aspects of polarized cell differentiation regulating epithelial and neuronal morphogenesis and T-cell polarization (PubMed:15182672, PubMed:16344308, PubMed:16965391, PubMed:18641685, PubMed:18716323, PubMed:19041750, PubMed:27380321). Via its interaction with CRTAM, required for the late phase polarization of a subset of CD4+ T-cells, which in turn regulates TCR-mediated proliferation and IFNG and IL22 production (By similarity). Plays a role in cell directional movement, cell orientation, cell sheet organization and Golgi complex polarization at the cell migration front (By similarity). Promotes epithelial cell layer barrier function via maintaining cell-cell adhesion (By similarity). Most probably functions in the establishment of apico-basal cell polarity (PubMed:16344308, PubMed:19041750). May function in cell proliferation regulating progression from G1 to S phase and as a positive regulator of apoptosis for instance during acinar morphogenesis of the mammary epithelium (PubMed:16965391, PubMed:19041750). May regulate cell invasion via MAPK-mediated cell migration and adhesion (PubMed:18641685, PubMed:18716323). May play a role in exocytosis and in the targeting of synaptic vesicles to synapses (PubMed:15182672). Functions as an activator of Rac GTPase activity (PubMed:15182672).</text>
</comment>
<comment type="subunit">
    <text evidence="2 6 7 8 9 11 12 14 18 20 21 24 26 27">Interacts with UBE3A (PubMed:11027293). Interacts with PAK1 and PAK2 (PubMed:18716323). Interacts (via PDZ domains) with VANGL2 (By similarity). Interacts (via PDZ domains) with LPP and TRIP6; the interaction is direct (PubMed:15649318, PubMed:16137684). Interacts (via PDZ domains) with TJP2 (PubMed:15975580). Interacts (via PDZ domains) with APC; may mediate APC targeting to adherens junctions of epithelial cells (PubMed:16611247). Interacts (via PDZ domains) with TSHR; regulates TSHR trafficking and function (PubMed:15775968). Interacts with ARHGEF7 and GIT1; interacts directly with ARHGEF7 (PubMed:15182672). Interacts with CTNNB1 (By similarity). Interacts with MAPK12 (By similarity). Interacts (via PDZ domains 1 and 3) with MCC (PubMed:19555689, PubMed:22480440). Interacts with DLG5 (PubMed:28169360). Interacts with STK4/MST1 and LATS1 in the presence of DLG5 (PubMed:28169360). Interacts (via PDZ domain 3) with CRTAM (via PDZ-binding motif); the interaction promotes CRTAM and SCRIB polarization in a subset of CD4+ T-cells (By similarity). Interacts with YES1, when YES1 is in a closed conformation; the interaction facilitates YES1 autophosphorylation (PubMed:33730553). Interacts (via PDZ domains) with VIM; the interaction protects SCRIB from proteasomal degradation and facilitates SCRIB localization to intermediate filaments, the interaction is reduced by cell contact inhibition (PubMed:19386766).</text>
</comment>
<comment type="subunit">
    <text evidence="6 16 22">(Microbial infection) Interacts (via fourth PDZ domain) with tick-borne encephalitis virus RNA-directed RNA polymerase NS5; this interaction targets viral NS5 to the cell membrane periphery and nucleus and prevents STAT1 phosphorylation, and thus, the activation of the JAK-STAT signaling pathway (PubMed:18042258). Interacts with HPV E6 (PubMed:11027293). Interacts with influenza A virus protein NS1; the interaction results in the translocation of SCRIB from the cell membrane to perinuclear puncta (PubMed:21849460).</text>
</comment>
<comment type="interaction">
    <interactant intactId="EBI-357345">
        <id>Q14160</id>
    </interactant>
    <interactant intactId="EBI-1567236">
        <id>Q9P0K1</id>
        <label>ADAM22</label>
    </interactant>
    <organismsDiffer>false</organismsDiffer>
    <experiments>3</experiments>
</comment>
<comment type="interaction">
    <interactant intactId="EBI-357345">
        <id>Q14160</id>
    </interactant>
    <interactant intactId="EBI-489993">
        <id>P25100</id>
        <label>ADRA1D</label>
    </interactant>
    <organismsDiffer>false</organismsDiffer>
    <experiments>19</experiments>
</comment>
<comment type="interaction">
    <interactant intactId="EBI-357345">
        <id>Q14160</id>
    </interactant>
    <interactant intactId="EBI-727707">
        <id>P25054</id>
        <label>APC</label>
    </interactant>
    <organismsDiffer>false</organismsDiffer>
    <experiments>5</experiments>
</comment>
<comment type="interaction">
    <interactant intactId="EBI-357345">
        <id>Q14160</id>
    </interactant>
    <interactant intactId="EBI-1057448">
        <id>Q5VV41</id>
        <label>ARHGEF16</label>
    </interactant>
    <organismsDiffer>false</organismsDiffer>
    <experiments>2</experiments>
</comment>
<comment type="interaction">
    <interactant intactId="EBI-357345">
        <id>Q14160</id>
    </interactant>
    <interactant intactId="EBI-717515">
        <id>Q14155</id>
        <label>ARHGEF7</label>
    </interactant>
    <organismsDiffer>false</organismsDiffer>
    <experiments>15</experiments>
</comment>
<comment type="interaction">
    <interactant intactId="EBI-357345">
        <id>Q14160</id>
    </interactant>
    <interactant intactId="EBI-5279998">
        <id>P20020</id>
        <label>ATP2B1</label>
    </interactant>
    <organismsDiffer>false</organismsDiffer>
    <experiments>2</experiments>
</comment>
<comment type="interaction">
    <interactant intactId="EBI-357345">
        <id>Q14160</id>
    </interactant>
    <interactant intactId="EBI-1174243">
        <id>Q01814</id>
        <label>ATP2B2</label>
    </interactant>
    <organismsDiffer>false</organismsDiffer>
    <experiments>2</experiments>
</comment>
<comment type="interaction">
    <interactant intactId="EBI-357345">
        <id>Q14160</id>
    </interactant>
    <interactant intactId="EBI-3870393">
        <id>P34998</id>
        <label>CRHR1</label>
    </interactant>
    <organismsDiffer>false</organismsDiffer>
    <experiments>2</experiments>
</comment>
<comment type="interaction">
    <interactant intactId="EBI-357345">
        <id>Q14160</id>
    </interactant>
    <interactant intactId="EBI-7266482">
        <id>Q9UQB3</id>
        <label>CTNND2</label>
    </interactant>
    <organismsDiffer>false</organismsDiffer>
    <experiments>2</experiments>
</comment>
<comment type="interaction">
    <interactant intactId="EBI-357345">
        <id>Q14160</id>
    </interactant>
    <interactant intactId="EBI-3843579">
        <id>Q9NS75</id>
        <label>CYSLTR2</label>
    </interactant>
    <organismsDiffer>false</organismsDiffer>
    <experiments>3</experiments>
</comment>
<comment type="interaction">
    <interactant intactId="EBI-357345">
        <id>Q14160</id>
    </interactant>
    <interactant intactId="EBI-9379658">
        <id>Q86X45</id>
        <label>DNAAF11</label>
    </interactant>
    <organismsDiffer>false</organismsDiffer>
    <experiments>2</experiments>
</comment>
<comment type="interaction">
    <interactant intactId="EBI-357345">
        <id>Q14160</id>
    </interactant>
    <interactant intactId="EBI-724571">
        <id>O00429</id>
        <label>DNM1L</label>
    </interactant>
    <organismsDiffer>false</organismsDiffer>
    <experiments>2</experiments>
</comment>
<comment type="interaction">
    <interactant intactId="EBI-357345">
        <id>Q14160</id>
    </interactant>
    <interactant intactId="EBI-11793223">
        <id>P0C2L3</id>
        <label>FAM163B</label>
    </interactant>
    <organismsDiffer>false</organismsDiffer>
    <experiments>3</experiments>
</comment>
<comment type="interaction">
    <interactant intactId="EBI-357345">
        <id>Q14160</id>
    </interactant>
    <interactant intactId="EBI-747570">
        <id>Q7L8L6</id>
        <label>FASTKD5</label>
    </interactant>
    <organismsDiffer>false</organismsDiffer>
    <experiments>2</experiments>
</comment>
<comment type="interaction">
    <interactant intactId="EBI-357345">
        <id>Q14160</id>
    </interactant>
    <interactant intactId="EBI-311279">
        <id>Q14CM0</id>
        <label>FRMPD4</label>
    </interactant>
    <organismsDiffer>false</organismsDiffer>
    <experiments>2</experiments>
</comment>
<comment type="interaction">
    <interactant intactId="EBI-357345">
        <id>Q14160</id>
    </interactant>
    <interactant intactId="EBI-6911715">
        <id>P33402</id>
        <label>GUCY1A2</label>
    </interactant>
    <organismsDiffer>false</organismsDiffer>
    <experiments>6</experiments>
</comment>
<comment type="interaction">
    <interactant intactId="EBI-357345">
        <id>Q14160</id>
    </interactant>
    <interactant intactId="EBI-6426121">
        <id>P22460</id>
        <label>KCNA5</label>
    </interactant>
    <organismsDiffer>false</organismsDiffer>
    <experiments>2</experiments>
</comment>
<comment type="interaction">
    <interactant intactId="EBI-357345">
        <id>Q14160</id>
    </interactant>
    <interactant intactId="EBI-11794596">
        <id>Q14500</id>
        <label>KCNJ12</label>
    </interactant>
    <organismsDiffer>false</organismsDiffer>
    <experiments>2</experiments>
</comment>
<comment type="interaction">
    <interactant intactId="EBI-357345">
        <id>Q14160</id>
    </interactant>
    <interactant intactId="EBI-703457">
        <id>P63252</id>
        <label>KCNJ2</label>
    </interactant>
    <organismsDiffer>false</organismsDiffer>
    <experiments>2</experiments>
</comment>
<comment type="interaction">
    <interactant intactId="EBI-357345">
        <id>Q14160</id>
    </interactant>
    <interactant intactId="EBI-706117">
        <id>P48050</id>
        <label>KCNJ4</label>
    </interactant>
    <organismsDiffer>false</organismsDiffer>
    <experiments>2</experiments>
</comment>
<comment type="interaction">
    <interactant intactId="EBI-357345">
        <id>Q14160</id>
    </interactant>
    <interactant intactId="EBI-602406">
        <id>P53778</id>
        <label>MAPK12</label>
    </interactant>
    <organismsDiffer>false</organismsDiffer>
    <experiments>6</experiments>
</comment>
<comment type="interaction">
    <interactant intactId="EBI-357345">
        <id>Q14160</id>
    </interactant>
    <interactant intactId="EBI-73995">
        <id>P27361</id>
        <label>MAPK3</label>
    </interactant>
    <organismsDiffer>false</organismsDiffer>
    <experiments>2</experiments>
</comment>
<comment type="interaction">
    <interactant intactId="EBI-357345">
        <id>Q14160</id>
    </interactant>
    <interactant intactId="EBI-307531">
        <id>P23508</id>
        <label>MCC</label>
    </interactant>
    <organismsDiffer>false</organismsDiffer>
    <experiments>15</experiments>
</comment>
<comment type="interaction">
    <interactant intactId="EBI-357345">
        <id>Q14160</id>
    </interactant>
    <interactant intactId="EBI-2511306">
        <id>Q7Z628</id>
        <label>NET1</label>
    </interactant>
    <organismsDiffer>false</organismsDiffer>
    <experiments>2</experiments>
</comment>
<comment type="interaction">
    <interactant intactId="EBI-357345">
        <id>Q14160</id>
    </interactant>
    <interactant intactId="EBI-11791121">
        <id>Q96DL1</id>
        <label>NXPE2</label>
    </interactant>
    <organismsDiffer>false</organismsDiffer>
    <experiments>2</experiments>
</comment>
<comment type="interaction">
    <interactant intactId="EBI-357345">
        <id>Q14160</id>
    </interactant>
    <interactant intactId="EBI-2511516">
        <id>O60346</id>
        <label>PHLPP1</label>
    </interactant>
    <organismsDiffer>false</organismsDiffer>
    <experiments>4</experiments>
</comment>
<comment type="interaction">
    <interactant intactId="EBI-357345">
        <id>Q14160</id>
    </interactant>
    <interactant intactId="EBI-726447">
        <id>Q99569</id>
        <label>PKP4</label>
    </interactant>
    <organismsDiffer>false</organismsDiffer>
    <experiments>4</experiments>
</comment>
<comment type="interaction">
    <interactant intactId="EBI-357345">
        <id>Q14160</id>
    </interactant>
    <interactant intactId="EBI-749285">
        <id>Q15311</id>
        <label>RALBP1</label>
    </interactant>
    <organismsDiffer>false</organismsDiffer>
    <experiments>2</experiments>
</comment>
<comment type="interaction">
    <interactant intactId="EBI-357345">
        <id>Q14160</id>
    </interactant>
    <interactant intactId="EBI-963034">
        <id>Q15418</id>
        <label>RPS6KA1</label>
    </interactant>
    <organismsDiffer>false</organismsDiffer>
    <experiments>3</experiments>
</comment>
<comment type="interaction">
    <interactant intactId="EBI-357345">
        <id>Q14160</id>
    </interactant>
    <interactant intactId="EBI-1384149">
        <id>Q15349</id>
        <label>RPS6KA2</label>
    </interactant>
    <organismsDiffer>false</organismsDiffer>
    <experiments>9</experiments>
</comment>
<comment type="interaction">
    <interactant intactId="EBI-357345">
        <id>Q14160</id>
    </interactant>
    <interactant intactId="EBI-11792220">
        <id>A6NIM6</id>
        <label>SLC15A5</label>
    </interactant>
    <organismsDiffer>false</organismsDiffer>
    <experiments>2</experiments>
</comment>
<comment type="interaction">
    <interactant intactId="EBI-357345">
        <id>Q14160</id>
    </interactant>
    <interactant intactId="EBI-3843589">
        <id>P48065</id>
        <label>SLC6A12</label>
    </interactant>
    <organismsDiffer>false</organismsDiffer>
    <experiments>2</experiments>
</comment>
<comment type="interaction">
    <interactant intactId="EBI-357345">
        <id>Q14160</id>
    </interactant>
    <interactant intactId="EBI-11023211">
        <id>Q9C0D5</id>
        <label>TANC1</label>
    </interactant>
    <organismsDiffer>false</organismsDiffer>
    <experiments>4</experiments>
</comment>
<comment type="interaction">
    <interactant intactId="EBI-357345">
        <id>Q14160</id>
    </interactant>
    <interactant intactId="EBI-13939599">
        <id>P16473</id>
        <label>TSHR</label>
    </interactant>
    <organismsDiffer>false</organismsDiffer>
    <experiments>3</experiments>
</comment>
<comment type="interaction">
    <interactant intactId="EBI-357345">
        <id>Q14160</id>
    </interactant>
    <interactant intactId="EBI-1043669">
        <id>Q14D04</id>
        <label>VEPH1</label>
    </interactant>
    <organismsDiffer>false</organismsDiffer>
    <experiments>2</experiments>
</comment>
<comment type="interaction">
    <interactant intactId="EBI-357345">
        <id>Q14160</id>
    </interactant>
    <interactant intactId="EBI-20730502">
        <id>A6NIX2</id>
        <label>WTIP</label>
    </interactant>
    <organismsDiffer>false</organismsDiffer>
    <experiments>2</experiments>
</comment>
<comment type="interaction">
    <interactant intactId="EBI-357345">
        <id>Q14160</id>
    </interactant>
    <interactant intactId="EBI-747743">
        <id>Q9GZV5</id>
        <label>WWTR1</label>
    </interactant>
    <organismsDiffer>false</organismsDiffer>
    <experiments>3</experiments>
</comment>
<comment type="interaction">
    <interactant intactId="EBI-357345">
        <id>Q14160</id>
    </interactant>
    <interactant intactId="EBI-1044059">
        <id>P46937</id>
        <label>YAP1</label>
    </interactant>
    <organismsDiffer>false</organismsDiffer>
    <experiments>2</experiments>
</comment>
<comment type="interaction">
    <interactant intactId="EBI-357345">
        <id>Q14160</id>
    </interactant>
    <interactant intactId="EBI-11791049">
        <id>B7Z2Y1</id>
    </interactant>
    <organismsDiffer>false</organismsDiffer>
    <experiments>3</experiments>
</comment>
<comment type="interaction">
    <interactant intactId="EBI-357345">
        <id>Q14160</id>
    </interactant>
    <interactant intactId="EBI-1177242">
        <id>P03126</id>
        <label>E6</label>
    </interactant>
    <organismsDiffer>true</organismsDiffer>
    <experiments>8</experiments>
</comment>
<comment type="interaction">
    <interactant intactId="EBI-357345">
        <id>Q14160</id>
    </interactant>
    <interactant intactId="EBI-11737184">
        <id>P06427</id>
        <label>E6</label>
    </interactant>
    <organismsDiffer>true</organismsDiffer>
    <experiments>3</experiments>
</comment>
<comment type="interaction">
    <interactant intactId="EBI-357345">
        <id>Q14160</id>
    </interactant>
    <interactant intactId="EBI-1186926">
        <id>P06463</id>
        <label>E6</label>
    </interactant>
    <organismsDiffer>true</organismsDiffer>
    <experiments>4</experiments>
</comment>
<comment type="interaction">
    <interactant intactId="EBI-357345">
        <id>Q14160</id>
    </interactant>
    <interactant intactId="EBI-11793707">
        <id>P24835</id>
        <label>E6</label>
    </interactant>
    <organismsDiffer>true</organismsDiffer>
    <experiments>2</experiments>
</comment>
<comment type="interaction">
    <interactant intactId="EBI-357345">
        <id>Q14160</id>
    </interactant>
    <interactant intactId="EBI-6980218">
        <id>Q9QXA3</id>
        <label>Fat1</label>
    </interactant>
    <organismsDiffer>true</organismsDiffer>
    <experiments>5</experiments>
</comment>
<comment type="interaction">
    <interactant intactId="EBI-357345">
        <id>Q14160</id>
    </interactant>
    <interactant intactId="EBI-11793850">
        <id>P0C213</id>
        <label>tax</label>
    </interactant>
    <organismsDiffer>true</organismsDiffer>
    <experiments>2</experiments>
</comment>
<comment type="interaction">
    <interactant intactId="EBI-357345">
        <id>Q14160</id>
    </interactant>
    <interactant intactId="EBI-11794384">
        <id>P0C222</id>
        <label>tax</label>
    </interactant>
    <organismsDiffer>true</organismsDiffer>
    <experiments>2</experiments>
</comment>
<comment type="subcellular location">
    <subcellularLocation>
        <location evidence="20 22 26">Cell membrane</location>
        <topology>Peripheral membrane protein</topology>
    </subcellularLocation>
    <subcellularLocation>
        <location evidence="25">Cell junction</location>
    </subcellularLocation>
    <subcellularLocation>
        <location>Cell junction</location>
        <location>Adherens junction</location>
    </subcellularLocation>
    <subcellularLocation>
        <location>Cell projection</location>
        <location>Lamellipodium</location>
    </subcellularLocation>
    <subcellularLocation>
        <location evidence="20">Cytoplasm</location>
    </subcellularLocation>
    <subcellularLocation>
        <location evidence="7">Postsynapse</location>
    </subcellularLocation>
    <subcellularLocation>
        <location evidence="7">Presynapse</location>
    </subcellularLocation>
    <text evidence="1 2 20">Targeting to cell-cell junctions which is CDH1-dependent is required for the pro-apoptotic activity. In a subset of CD4+ T-cells, colocalizes with CRTAM at the immunological synapse during the late phase of T-cell activation (By similarity). Localized to small puncta throughout the cytoplasm and cell membrane when in the presence of SNAIL1 (By similarity). Localized along the length of perinuclear emanating vimentin bundles and at vimentin-positive fibrils at the cell periphery (PubMed:19386766). Localized to the lateral plasma membrane during the establishment and maturation of cell-cell contacts (PubMed:19386766).</text>
</comment>
<comment type="alternative products">
    <event type="alternative splicing"/>
    <isoform>
        <id>Q14160-3</id>
        <name>3</name>
        <sequence type="displayed"/>
    </isoform>
    <isoform>
        <id>Q14160-1</id>
        <name>1</name>
        <sequence type="described" ref="VSP_062397"/>
    </isoform>
    <isoform>
        <id>Q14160-2</id>
        <name>2</name>
        <name>Variant N1</name>
        <sequence type="described" ref="VSP_062396 VSP_062397"/>
    </isoform>
</comment>
<comment type="tissue specificity">
    <text evidence="10">Expressed in kidney, skeletal muscles, liver, lung, breast, intestine, placenta and skin mainly in epithelial cells (at protein level).</text>
</comment>
<comment type="PTM">
    <text evidence="6">Ubiquitinated; targeted for UBE3A-dependent multiubiquitination in the presence of high-risk HPV E6 proteins and degraded.</text>
</comment>
<comment type="PTM">
    <text evidence="25">Palmitoylated (PubMed:27380321). Could be depalmitoylated by LYPLA1 and/or LYPLA2 (PubMed:27380321). Palmitoylation of SCRIB by ZDHHC7 is required for its localization to cell-cell junctions, function in the establishement of epithelial cell polarity and the regulation of downstream signaling pathways important for epithelial cell differentiation (PubMed:27380321).</text>
</comment>
<comment type="disease" evidence="23">
    <disease id="DI-02042">
        <name>Neural tube defects</name>
        <acronym>NTD</acronym>
        <description>Congenital malformations of the central nervous system and adjacent structures related to defective neural tube closure during the first trimester of pregnancy. Failure of neural tube closure can occur at any level of the embryonic axis. Common NTD forms include anencephaly, myelomeningocele and spina bifida, which result from the failure of fusion in the cranial and spinal region of the neural tube. NTDs have a multifactorial etiology encompassing both genetic and environmental components.</description>
        <dbReference type="MIM" id="182940"/>
    </disease>
    <text>The disease is caused by variants affecting the gene represented in this entry.</text>
</comment>
<comment type="similarity">
    <text evidence="30">Belongs to the LAP (LRR and PDZ) protein family.</text>
</comment>
<dbReference type="EMBL" id="AF240677">
    <property type="protein sequence ID" value="AAP88017.1"/>
    <property type="molecule type" value="mRNA"/>
</dbReference>
<dbReference type="EMBL" id="AY062238">
    <property type="protein sequence ID" value="AAL38976.1"/>
    <property type="molecule type" value="mRNA"/>
</dbReference>
<dbReference type="EMBL" id="AF271734">
    <property type="protein sequence ID" value="AAP88018.2"/>
    <property type="molecule type" value="mRNA"/>
</dbReference>
<dbReference type="EMBL" id="D63481">
    <property type="protein sequence ID" value="BAA09768.3"/>
    <property type="molecule type" value="mRNA"/>
</dbReference>
<dbReference type="EMBL" id="AC105219">
    <property type="status" value="NOT_ANNOTATED_CDS"/>
    <property type="molecule type" value="Genomic_DNA"/>
</dbReference>
<dbReference type="EMBL" id="KF458881">
    <property type="status" value="NOT_ANNOTATED_CDS"/>
    <property type="molecule type" value="Genomic_DNA"/>
</dbReference>
<dbReference type="EMBL" id="BC009490">
    <property type="protein sequence ID" value="AAH09490.2"/>
    <property type="molecule type" value="mRNA"/>
</dbReference>
<dbReference type="EMBL" id="BC014632">
    <property type="protein sequence ID" value="AAH14632.2"/>
    <property type="molecule type" value="mRNA"/>
</dbReference>
<dbReference type="CCDS" id="CCDS6411.1">
    <molecule id="Q14160-1"/>
</dbReference>
<dbReference type="CCDS" id="CCDS6412.1">
    <molecule id="Q14160-3"/>
</dbReference>
<dbReference type="RefSeq" id="NP_056171.3">
    <molecule id="Q14160-1"/>
    <property type="nucleotide sequence ID" value="NM_015356.4"/>
</dbReference>
<dbReference type="RefSeq" id="NP_874365.3">
    <molecule id="Q14160-3"/>
    <property type="nucleotide sequence ID" value="NM_182706.4"/>
</dbReference>
<dbReference type="PDB" id="1UJU">
    <property type="method" value="NMR"/>
    <property type="chains" value="A=1096-1193"/>
</dbReference>
<dbReference type="PDB" id="1WHA">
    <property type="method" value="NMR"/>
    <property type="chains" value="A=860-951"/>
</dbReference>
<dbReference type="PDB" id="1X5Q">
    <property type="method" value="NMR"/>
    <property type="chains" value="A=718-814"/>
</dbReference>
<dbReference type="PDB" id="2W4F">
    <property type="method" value="X-ray"/>
    <property type="resolution" value="1.30 A"/>
    <property type="chains" value="A=725-815"/>
</dbReference>
<dbReference type="PDB" id="4WYT">
    <property type="method" value="X-ray"/>
    <property type="resolution" value="2.60 A"/>
    <property type="chains" value="A=992-1203"/>
</dbReference>
<dbReference type="PDB" id="4WYU">
    <property type="method" value="X-ray"/>
    <property type="resolution" value="2.50 A"/>
    <property type="chains" value="A/B=992-1203"/>
</dbReference>
<dbReference type="PDB" id="5VWC">
    <property type="method" value="X-ray"/>
    <property type="resolution" value="1.91 A"/>
    <property type="chains" value="A=725-815"/>
</dbReference>
<dbReference type="PDB" id="5VWI">
    <property type="method" value="X-ray"/>
    <property type="resolution" value="1.75 A"/>
    <property type="chains" value="A/B=1002-1092"/>
</dbReference>
<dbReference type="PDB" id="5VWK">
    <property type="method" value="X-ray"/>
    <property type="resolution" value="2.35 A"/>
    <property type="chains" value="A/B/C/D=700-816"/>
</dbReference>
<dbReference type="PDB" id="6EEY">
    <property type="method" value="X-ray"/>
    <property type="resolution" value="1.15 A"/>
    <property type="chains" value="A=1098-1189"/>
</dbReference>
<dbReference type="PDB" id="6ESP">
    <property type="method" value="NMR"/>
    <property type="chains" value="A=719-829"/>
</dbReference>
<dbReference type="PDB" id="6MS1">
    <property type="method" value="X-ray"/>
    <property type="resolution" value="1.35 A"/>
    <property type="chains" value="A/B=722-815"/>
</dbReference>
<dbReference type="PDB" id="6MTU">
    <property type="method" value="X-ray"/>
    <property type="resolution" value="2.14 A"/>
    <property type="chains" value="A/B=700-816"/>
</dbReference>
<dbReference type="PDB" id="6MTV">
    <property type="method" value="X-ray"/>
    <property type="resolution" value="2.60 A"/>
    <property type="chains" value="A/B=700-816"/>
</dbReference>
<dbReference type="PDB" id="6MYE">
    <property type="method" value="X-ray"/>
    <property type="resolution" value="1.10 A"/>
    <property type="chains" value="A=725-815"/>
</dbReference>
<dbReference type="PDB" id="6MYF">
    <property type="method" value="X-ray"/>
    <property type="resolution" value="1.60 A"/>
    <property type="chains" value="A=725-815"/>
</dbReference>
<dbReference type="PDB" id="6XA6">
    <property type="method" value="X-ray"/>
    <property type="resolution" value="1.95 A"/>
    <property type="chains" value="A/B=1002-1092"/>
</dbReference>
<dbReference type="PDB" id="6XA7">
    <property type="method" value="X-ray"/>
    <property type="resolution" value="2.50 A"/>
    <property type="chains" value="A/B/C/D=860-950"/>
</dbReference>
<dbReference type="PDB" id="6XA8">
    <property type="method" value="X-ray"/>
    <property type="resolution" value="2.20 A"/>
    <property type="chains" value="A/B=700-816"/>
</dbReference>
<dbReference type="PDB" id="7JO7">
    <property type="method" value="X-ray"/>
    <property type="resolution" value="2.44 A"/>
    <property type="chains" value="A/B/C/D=860-950"/>
</dbReference>
<dbReference type="PDB" id="7QRS">
    <property type="method" value="X-ray"/>
    <property type="resolution" value="1.77 A"/>
    <property type="chains" value="A/B=700-816"/>
</dbReference>
<dbReference type="PDB" id="7QRT">
    <property type="method" value="X-ray"/>
    <property type="resolution" value="1.90 A"/>
    <property type="chains" value="A/B=859-950"/>
</dbReference>
<dbReference type="PDB" id="7QS8">
    <property type="method" value="X-ray"/>
    <property type="resolution" value="1.85 A"/>
    <property type="chains" value="A/B=1002-1092"/>
</dbReference>
<dbReference type="PDB" id="7QS9">
    <property type="method" value="X-ray"/>
    <property type="resolution" value="1.80 A"/>
    <property type="chains" value="A/B=700-816"/>
</dbReference>
<dbReference type="PDB" id="7QSA">
    <property type="method" value="X-ray"/>
    <property type="resolution" value="2.02 A"/>
    <property type="chains" value="A/B=1002-1092"/>
</dbReference>
<dbReference type="PDB" id="7QSB">
    <property type="method" value="X-ray"/>
    <property type="resolution" value="1.84 A"/>
    <property type="chains" value="A/B=1002-1092"/>
</dbReference>
<dbReference type="PDB" id="7QTO">
    <property type="method" value="X-ray"/>
    <property type="resolution" value="3.50 A"/>
    <property type="chains" value="A/B=700-816"/>
</dbReference>
<dbReference type="PDB" id="7QTP">
    <property type="method" value="X-ray"/>
    <property type="resolution" value="1.90 A"/>
    <property type="chains" value="A=700-816"/>
</dbReference>
<dbReference type="PDB" id="7QTU">
    <property type="method" value="X-ray"/>
    <property type="resolution" value="2.84 A"/>
    <property type="chains" value="A/B/E/G=1002-1092"/>
</dbReference>
<dbReference type="PDB" id="8B82">
    <property type="method" value="X-ray"/>
    <property type="resolution" value="2.80 A"/>
    <property type="chains" value="A/B=701-816"/>
</dbReference>
<dbReference type="PDB" id="8B87">
    <property type="method" value="X-ray"/>
    <property type="resolution" value="2.00 A"/>
    <property type="chains" value="A/B=700-815"/>
</dbReference>
<dbReference type="PDB" id="8B8O">
    <property type="method" value="X-ray"/>
    <property type="resolution" value="2.90 A"/>
    <property type="chains" value="A/B=1002-1092"/>
</dbReference>
<dbReference type="PDB" id="8B9T">
    <property type="method" value="X-ray"/>
    <property type="resolution" value="2.50 A"/>
    <property type="chains" value="A=1002-1092"/>
</dbReference>
<dbReference type="PDB" id="8BIA">
    <property type="method" value="X-ray"/>
    <property type="resolution" value="2.40 A"/>
    <property type="chains" value="A=701-816"/>
</dbReference>
<dbReference type="PDB" id="8BJ0">
    <property type="method" value="X-ray"/>
    <property type="resolution" value="2.60 A"/>
    <property type="chains" value="A=1002-1092"/>
</dbReference>
<dbReference type="PDB" id="8CD3">
    <property type="method" value="X-ray"/>
    <property type="resolution" value="1.90 A"/>
    <property type="chains" value="B=715-815"/>
</dbReference>
<dbReference type="PDBsum" id="1UJU"/>
<dbReference type="PDBsum" id="1WHA"/>
<dbReference type="PDBsum" id="1X5Q"/>
<dbReference type="PDBsum" id="2W4F"/>
<dbReference type="PDBsum" id="4WYT"/>
<dbReference type="PDBsum" id="4WYU"/>
<dbReference type="PDBsum" id="5VWC"/>
<dbReference type="PDBsum" id="5VWI"/>
<dbReference type="PDBsum" id="5VWK"/>
<dbReference type="PDBsum" id="6EEY"/>
<dbReference type="PDBsum" id="6ESP"/>
<dbReference type="PDBsum" id="6MS1"/>
<dbReference type="PDBsum" id="6MTU"/>
<dbReference type="PDBsum" id="6MTV"/>
<dbReference type="PDBsum" id="6MYE"/>
<dbReference type="PDBsum" id="6MYF"/>
<dbReference type="PDBsum" id="6XA6"/>
<dbReference type="PDBsum" id="6XA7"/>
<dbReference type="PDBsum" id="6XA8"/>
<dbReference type="PDBsum" id="7JO7"/>
<dbReference type="PDBsum" id="7QRS"/>
<dbReference type="PDBsum" id="7QRT"/>
<dbReference type="PDBsum" id="7QS8"/>
<dbReference type="PDBsum" id="7QS9"/>
<dbReference type="PDBsum" id="7QSA"/>
<dbReference type="PDBsum" id="7QSB"/>
<dbReference type="PDBsum" id="7QTO"/>
<dbReference type="PDBsum" id="7QTP"/>
<dbReference type="PDBsum" id="7QTU"/>
<dbReference type="PDBsum" id="8B82"/>
<dbReference type="PDBsum" id="8B87"/>
<dbReference type="PDBsum" id="8B8O"/>
<dbReference type="PDBsum" id="8B9T"/>
<dbReference type="PDBsum" id="8BIA"/>
<dbReference type="PDBsum" id="8BJ0"/>
<dbReference type="PDBsum" id="8CD3"/>
<dbReference type="SMR" id="Q14160"/>
<dbReference type="BioGRID" id="117060">
    <property type="interactions" value="279"/>
</dbReference>
<dbReference type="ComplexPortal" id="CPX-6168">
    <property type="entry name" value="Scribble cell polarity complex, DLG1-LLGL2-SCRIB variant"/>
</dbReference>
<dbReference type="ComplexPortal" id="CPX-6184">
    <property type="entry name" value="Scribble cell polarity complex, DLG2-LLGL2-SCRIB variant"/>
</dbReference>
<dbReference type="ComplexPortal" id="CPX-6185">
    <property type="entry name" value="Scribble cell polarity complex, DLG3-LLGL2-SCRIB variant"/>
</dbReference>
<dbReference type="ComplexPortal" id="CPX-6186">
    <property type="entry name" value="Scribble cell polarity complex, DLG4-LLGL2-SCRIB variant"/>
</dbReference>
<dbReference type="ComplexPortal" id="CPX-6187">
    <property type="entry name" value="Scribble cell polarity complex, DLG5-LLGL2-SCRIB variant"/>
</dbReference>
<dbReference type="ComplexPortal" id="CPX-6188">
    <property type="entry name" value="Scribble cell polarity complex, DLG5-LLGL1-SCRIB variant"/>
</dbReference>
<dbReference type="ComplexPortal" id="CPX-6189">
    <property type="entry name" value="Scribble cell polarity complex, DLG4-LLGL1-SCRIB variant"/>
</dbReference>
<dbReference type="ComplexPortal" id="CPX-6190">
    <property type="entry name" value="Scribble cell polarity complex, DLG3-LLGL1-SCRIB variant"/>
</dbReference>
<dbReference type="ComplexPortal" id="CPX-6191">
    <property type="entry name" value="Scribble cell polarity complex, DLG2-LLGL1-SCRIB variant"/>
</dbReference>
<dbReference type="ComplexPortal" id="CPX-6192">
    <property type="entry name" value="Scribble cell polarity complex, DLG1-LLGL1-SCRIB variant"/>
</dbReference>
<dbReference type="CORUM" id="Q14160"/>
<dbReference type="DIP" id="DIP-31259N"/>
<dbReference type="ELM" id="Q14160"/>
<dbReference type="FunCoup" id="Q14160">
    <property type="interactions" value="1992"/>
</dbReference>
<dbReference type="IntAct" id="Q14160">
    <property type="interactions" value="270"/>
</dbReference>
<dbReference type="MINT" id="Q14160"/>
<dbReference type="STRING" id="9606.ENSP00000349486"/>
<dbReference type="MoonDB" id="Q14160">
    <property type="type" value="Predicted"/>
</dbReference>
<dbReference type="GlyCosmos" id="Q14160">
    <property type="glycosylation" value="1 site, 2 glycans"/>
</dbReference>
<dbReference type="GlyGen" id="Q14160">
    <property type="glycosylation" value="6 sites, 2 O-linked glycans (3 sites)"/>
</dbReference>
<dbReference type="iPTMnet" id="Q14160"/>
<dbReference type="PhosphoSitePlus" id="Q14160"/>
<dbReference type="SwissPalm" id="Q14160"/>
<dbReference type="BioMuta" id="SCRIB"/>
<dbReference type="DMDM" id="261260101"/>
<dbReference type="jPOST" id="Q14160"/>
<dbReference type="MassIVE" id="Q14160"/>
<dbReference type="PaxDb" id="9606-ENSP00000349486"/>
<dbReference type="PeptideAtlas" id="Q14160"/>
<dbReference type="ProteomicsDB" id="59873">
    <molecule id="Q14160-1"/>
</dbReference>
<dbReference type="ProteomicsDB" id="59874">
    <molecule id="Q14160-2"/>
</dbReference>
<dbReference type="ProteomicsDB" id="59875">
    <molecule id="Q14160-3"/>
</dbReference>
<dbReference type="Pumba" id="Q14160"/>
<dbReference type="Antibodypedia" id="43533">
    <property type="antibodies" value="137 antibodies from 28 providers"/>
</dbReference>
<dbReference type="DNASU" id="23513"/>
<dbReference type="Ensembl" id="ENST00000320476.7">
    <molecule id="Q14160-1"/>
    <property type="protein sequence ID" value="ENSP00000322938.3"/>
    <property type="gene ID" value="ENSG00000180900.20"/>
</dbReference>
<dbReference type="Ensembl" id="ENST00000356994.7">
    <molecule id="Q14160-3"/>
    <property type="protein sequence ID" value="ENSP00000349486.2"/>
    <property type="gene ID" value="ENSG00000180900.20"/>
</dbReference>
<dbReference type="Ensembl" id="ENST00000377533.7">
    <molecule id="Q14160-2"/>
    <property type="protein sequence ID" value="ENSP00000366756.3"/>
    <property type="gene ID" value="ENSG00000180900.20"/>
</dbReference>
<dbReference type="Ensembl" id="ENST00000611528.2">
    <molecule id="Q14160-2"/>
    <property type="protein sequence ID" value="ENSP00000479898.1"/>
    <property type="gene ID" value="ENSG00000274287.4"/>
</dbReference>
<dbReference type="Ensembl" id="ENST00000612204.4">
    <molecule id="Q14160-3"/>
    <property type="protein sequence ID" value="ENSP00000484041.1"/>
    <property type="gene ID" value="ENSG00000274287.4"/>
</dbReference>
<dbReference type="Ensembl" id="ENST00000622455.4">
    <molecule id="Q14160-1"/>
    <property type="protein sequence ID" value="ENSP00000482406.1"/>
    <property type="gene ID" value="ENSG00000274287.4"/>
</dbReference>
<dbReference type="GeneID" id="23513"/>
<dbReference type="KEGG" id="hsa:23513"/>
<dbReference type="MANE-Select" id="ENST00000356994.7">
    <property type="protein sequence ID" value="ENSP00000349486.2"/>
    <property type="RefSeq nucleotide sequence ID" value="NM_182706.5"/>
    <property type="RefSeq protein sequence ID" value="NP_874365.3"/>
</dbReference>
<dbReference type="UCSC" id="uc003yzo.1">
    <molecule id="Q14160-3"/>
    <property type="organism name" value="human"/>
</dbReference>
<dbReference type="AGR" id="HGNC:30377"/>
<dbReference type="CTD" id="23513"/>
<dbReference type="DisGeNET" id="23513"/>
<dbReference type="GeneCards" id="SCRIB"/>
<dbReference type="HGNC" id="HGNC:30377">
    <property type="gene designation" value="SCRIB"/>
</dbReference>
<dbReference type="HPA" id="ENSG00000180900">
    <property type="expression patterns" value="Low tissue specificity"/>
</dbReference>
<dbReference type="MalaCards" id="SCRIB"/>
<dbReference type="MIM" id="182940">
    <property type="type" value="phenotype"/>
</dbReference>
<dbReference type="MIM" id="607733">
    <property type="type" value="gene"/>
</dbReference>
<dbReference type="neXtProt" id="NX_Q14160"/>
<dbReference type="OpenTargets" id="ENSG00000180900"/>
<dbReference type="PharmGKB" id="PA134936275"/>
<dbReference type="VEuPathDB" id="HostDB:ENSG00000180900"/>
<dbReference type="eggNOG" id="KOG0619">
    <property type="taxonomic scope" value="Eukaryota"/>
</dbReference>
<dbReference type="GeneTree" id="ENSGT00940000154025"/>
<dbReference type="HOGENOM" id="CLU_000288_18_20_1"/>
<dbReference type="InParanoid" id="Q14160"/>
<dbReference type="OrthoDB" id="676979at2759"/>
<dbReference type="PAN-GO" id="Q14160">
    <property type="GO annotations" value="10 GO annotations based on evolutionary models"/>
</dbReference>
<dbReference type="PhylomeDB" id="Q14160"/>
<dbReference type="TreeFam" id="TF351429"/>
<dbReference type="PathwayCommons" id="Q14160"/>
<dbReference type="Reactome" id="R-HSA-4608870">
    <property type="pathway name" value="Asymmetric localization of PCP proteins"/>
</dbReference>
<dbReference type="Reactome" id="R-HSA-9013148">
    <property type="pathway name" value="CDC42 GTPase cycle"/>
</dbReference>
<dbReference type="Reactome" id="R-HSA-9013406">
    <property type="pathway name" value="RHOQ GTPase cycle"/>
</dbReference>
<dbReference type="Reactome" id="R-HSA-9013409">
    <property type="pathway name" value="RHOJ GTPase cycle"/>
</dbReference>
<dbReference type="Reactome" id="R-HSA-9696264">
    <property type="pathway name" value="RND3 GTPase cycle"/>
</dbReference>
<dbReference type="Reactome" id="R-HSA-9696270">
    <property type="pathway name" value="RND2 GTPase cycle"/>
</dbReference>
<dbReference type="SignaLink" id="Q14160"/>
<dbReference type="SIGNOR" id="Q14160"/>
<dbReference type="BioGRID-ORCS" id="23513">
    <property type="hits" value="34 hits in 1156 CRISPR screens"/>
</dbReference>
<dbReference type="CD-CODE" id="FB4E32DD">
    <property type="entry name" value="Presynaptic clusters and postsynaptic densities"/>
</dbReference>
<dbReference type="ChiTaRS" id="SCRIB">
    <property type="organism name" value="human"/>
</dbReference>
<dbReference type="EvolutionaryTrace" id="Q14160"/>
<dbReference type="GeneWiki" id="SCRIB"/>
<dbReference type="GenomeRNAi" id="23513"/>
<dbReference type="Pharos" id="Q14160">
    <property type="development level" value="Tbio"/>
</dbReference>
<dbReference type="PRO" id="PR:Q14160"/>
<dbReference type="Proteomes" id="UP000005640">
    <property type="component" value="Chromosome 8"/>
</dbReference>
<dbReference type="RNAct" id="Q14160">
    <property type="molecule type" value="protein"/>
</dbReference>
<dbReference type="Bgee" id="ENSG00000180900">
    <property type="expression patterns" value="Expressed in lower esophagus mucosa and 93 other cell types or tissues"/>
</dbReference>
<dbReference type="ExpressionAtlas" id="Q14160">
    <property type="expression patterns" value="baseline and differential"/>
</dbReference>
<dbReference type="GO" id="GO:0005912">
    <property type="term" value="C:adherens junction"/>
    <property type="evidence" value="ECO:0000314"/>
    <property type="project" value="UniProtKB"/>
</dbReference>
<dbReference type="GO" id="GO:0016323">
    <property type="term" value="C:basolateral plasma membrane"/>
    <property type="evidence" value="ECO:0000318"/>
    <property type="project" value="GO_Central"/>
</dbReference>
<dbReference type="GO" id="GO:0030054">
    <property type="term" value="C:cell junction"/>
    <property type="evidence" value="ECO:0000314"/>
    <property type="project" value="HPA"/>
</dbReference>
<dbReference type="GO" id="GO:0044291">
    <property type="term" value="C:cell-cell contact zone"/>
    <property type="evidence" value="ECO:0007669"/>
    <property type="project" value="Ensembl"/>
</dbReference>
<dbReference type="GO" id="GO:0005911">
    <property type="term" value="C:cell-cell junction"/>
    <property type="evidence" value="ECO:0000314"/>
    <property type="project" value="UniProtKB"/>
</dbReference>
<dbReference type="GO" id="GO:0005737">
    <property type="term" value="C:cytoplasm"/>
    <property type="evidence" value="ECO:0000314"/>
    <property type="project" value="UniProtKB"/>
</dbReference>
<dbReference type="GO" id="GO:0070062">
    <property type="term" value="C:extracellular exosome"/>
    <property type="evidence" value="ECO:0007005"/>
    <property type="project" value="UniProtKB"/>
</dbReference>
<dbReference type="GO" id="GO:0099147">
    <property type="term" value="C:extrinsic component of postsynaptic density membrane"/>
    <property type="evidence" value="ECO:0007669"/>
    <property type="project" value="Ensembl"/>
</dbReference>
<dbReference type="GO" id="GO:0098978">
    <property type="term" value="C:glutamatergic synapse"/>
    <property type="evidence" value="ECO:0007669"/>
    <property type="project" value="Ensembl"/>
</dbReference>
<dbReference type="GO" id="GO:0001772">
    <property type="term" value="C:immunological synapse"/>
    <property type="evidence" value="ECO:0000250"/>
    <property type="project" value="UniProtKB"/>
</dbReference>
<dbReference type="GO" id="GO:0030027">
    <property type="term" value="C:lamellipodium"/>
    <property type="evidence" value="ECO:0007669"/>
    <property type="project" value="UniProtKB-SubCell"/>
</dbReference>
<dbReference type="GO" id="GO:0035748">
    <property type="term" value="C:myelin sheath abaxonal region"/>
    <property type="evidence" value="ECO:0007669"/>
    <property type="project" value="Ensembl"/>
</dbReference>
<dbReference type="GO" id="GO:0005654">
    <property type="term" value="C:nucleoplasm"/>
    <property type="evidence" value="ECO:0000314"/>
    <property type="project" value="HPA"/>
</dbReference>
<dbReference type="GO" id="GO:0005886">
    <property type="term" value="C:plasma membrane"/>
    <property type="evidence" value="ECO:0000314"/>
    <property type="project" value="HPA"/>
</dbReference>
<dbReference type="GO" id="GO:0014069">
    <property type="term" value="C:postsynaptic density"/>
    <property type="evidence" value="ECO:0000318"/>
    <property type="project" value="GO_Central"/>
</dbReference>
<dbReference type="GO" id="GO:0098793">
    <property type="term" value="C:presynapse"/>
    <property type="evidence" value="ECO:0007669"/>
    <property type="project" value="UniProtKB-SubCell"/>
</dbReference>
<dbReference type="GO" id="GO:0034750">
    <property type="term" value="C:Scrib-APC-beta-catenin complex"/>
    <property type="evidence" value="ECO:0000314"/>
    <property type="project" value="BHF-UCL"/>
</dbReference>
<dbReference type="GO" id="GO:0045296">
    <property type="term" value="F:cadherin binding"/>
    <property type="evidence" value="ECO:0007005"/>
    <property type="project" value="BHF-UCL"/>
</dbReference>
<dbReference type="GO" id="GO:0019901">
    <property type="term" value="F:protein kinase binding"/>
    <property type="evidence" value="ECO:0000318"/>
    <property type="project" value="GO_Central"/>
</dbReference>
<dbReference type="GO" id="GO:0035591">
    <property type="term" value="F:signaling adaptor activity"/>
    <property type="evidence" value="ECO:0000314"/>
    <property type="project" value="UniProt"/>
</dbReference>
<dbReference type="GO" id="GO:0090630">
    <property type="term" value="P:activation of GTPase activity"/>
    <property type="evidence" value="ECO:0000315"/>
    <property type="project" value="UniProtKB"/>
</dbReference>
<dbReference type="GO" id="GO:0060561">
    <property type="term" value="P:apoptotic process involved in morphogenesis"/>
    <property type="evidence" value="ECO:0000315"/>
    <property type="project" value="UniProtKB"/>
</dbReference>
<dbReference type="GO" id="GO:0043615">
    <property type="term" value="P:astrocyte cell migration"/>
    <property type="evidence" value="ECO:0007669"/>
    <property type="project" value="Ensembl"/>
</dbReference>
<dbReference type="GO" id="GO:0060088">
    <property type="term" value="P:auditory receptor cell stereocilium organization"/>
    <property type="evidence" value="ECO:0007669"/>
    <property type="project" value="Ensembl"/>
</dbReference>
<dbReference type="GO" id="GO:0016477">
    <property type="term" value="P:cell migration"/>
    <property type="evidence" value="ECO:0000315"/>
    <property type="project" value="UniProtKB"/>
</dbReference>
<dbReference type="GO" id="GO:0008283">
    <property type="term" value="P:cell population proliferation"/>
    <property type="evidence" value="ECO:0000314"/>
    <property type="project" value="UniProtKB"/>
</dbReference>
<dbReference type="GO" id="GO:0098609">
    <property type="term" value="P:cell-cell adhesion"/>
    <property type="evidence" value="ECO:0000316"/>
    <property type="project" value="UniProtKB"/>
</dbReference>
<dbReference type="GO" id="GO:0021747">
    <property type="term" value="P:cochlear nucleus development"/>
    <property type="evidence" value="ECO:0007669"/>
    <property type="project" value="Ensembl"/>
</dbReference>
<dbReference type="GO" id="GO:0010669">
    <property type="term" value="P:epithelial structure maintenance"/>
    <property type="evidence" value="ECO:0000250"/>
    <property type="project" value="UniProtKB"/>
</dbReference>
<dbReference type="GO" id="GO:0035089">
    <property type="term" value="P:establishment of apical/basal cell polarity"/>
    <property type="evidence" value="ECO:0000315"/>
    <property type="project" value="UniProtKB"/>
</dbReference>
<dbReference type="GO" id="GO:0001768">
    <property type="term" value="P:establishment of T cell polarity"/>
    <property type="evidence" value="ECO:0000250"/>
    <property type="project" value="UniProtKB"/>
</dbReference>
<dbReference type="GO" id="GO:0045197">
    <property type="term" value="P:establishment or maintenance of epithelial cell apical/basal polarity"/>
    <property type="evidence" value="ECO:0000318"/>
    <property type="project" value="GO_Central"/>
</dbReference>
<dbReference type="GO" id="GO:0060603">
    <property type="term" value="P:mammary gland duct morphogenesis"/>
    <property type="evidence" value="ECO:0000250"/>
    <property type="project" value="UniProtKB"/>
</dbReference>
<dbReference type="GO" id="GO:0046007">
    <property type="term" value="P:negative regulation of activated T cell proliferation"/>
    <property type="evidence" value="ECO:0000250"/>
    <property type="project" value="UniProtKB"/>
</dbReference>
<dbReference type="GO" id="GO:0045930">
    <property type="term" value="P:negative regulation of mitotic cell cycle"/>
    <property type="evidence" value="ECO:0000314"/>
    <property type="project" value="UniProtKB"/>
</dbReference>
<dbReference type="GO" id="GO:0001843">
    <property type="term" value="P:neural tube closure"/>
    <property type="evidence" value="ECO:0000315"/>
    <property type="project" value="UniProtKB"/>
</dbReference>
<dbReference type="GO" id="GO:0098887">
    <property type="term" value="P:neurotransmitter receptor transport, endosome to postsynaptic membrane"/>
    <property type="evidence" value="ECO:0000318"/>
    <property type="project" value="GO_Central"/>
</dbReference>
<dbReference type="GO" id="GO:0030859">
    <property type="term" value="P:polarized epithelial cell differentiation"/>
    <property type="evidence" value="ECO:0000315"/>
    <property type="project" value="UniProtKB"/>
</dbReference>
<dbReference type="GO" id="GO:0050918">
    <property type="term" value="P:positive chemotaxis"/>
    <property type="evidence" value="ECO:0000315"/>
    <property type="project" value="UniProtKB"/>
</dbReference>
<dbReference type="GO" id="GO:0043065">
    <property type="term" value="P:positive regulation of apoptotic process"/>
    <property type="evidence" value="ECO:0000315"/>
    <property type="project" value="UniProtKB"/>
</dbReference>
<dbReference type="GO" id="GO:0001921">
    <property type="term" value="P:positive regulation of receptor recycling"/>
    <property type="evidence" value="ECO:0000315"/>
    <property type="project" value="UniProtKB"/>
</dbReference>
<dbReference type="GO" id="GO:0032729">
    <property type="term" value="P:positive regulation of type II interferon production"/>
    <property type="evidence" value="ECO:0000250"/>
    <property type="project" value="UniProtKB"/>
</dbReference>
<dbReference type="GO" id="GO:0036342">
    <property type="term" value="P:post-anal tail morphogenesis"/>
    <property type="evidence" value="ECO:0007669"/>
    <property type="project" value="Ensembl"/>
</dbReference>
<dbReference type="GO" id="GO:0071896">
    <property type="term" value="P:protein localization to adherens junction"/>
    <property type="evidence" value="ECO:0000315"/>
    <property type="project" value="BHF-UCL"/>
</dbReference>
<dbReference type="GO" id="GO:0043113">
    <property type="term" value="P:receptor clustering"/>
    <property type="evidence" value="ECO:0000318"/>
    <property type="project" value="GO_Central"/>
</dbReference>
<dbReference type="GO" id="GO:0099149">
    <property type="term" value="P:regulation of postsynaptic neurotransmitter receptor internalization"/>
    <property type="evidence" value="ECO:0007669"/>
    <property type="project" value="Ensembl"/>
</dbReference>
<dbReference type="GO" id="GO:0048488">
    <property type="term" value="P:synaptic vesicle endocytosis"/>
    <property type="evidence" value="ECO:0007669"/>
    <property type="project" value="Ensembl"/>
</dbReference>
<dbReference type="GO" id="GO:0016080">
    <property type="term" value="P:synaptic vesicle targeting"/>
    <property type="evidence" value="ECO:0007669"/>
    <property type="project" value="Ensembl"/>
</dbReference>
<dbReference type="GO" id="GO:0042060">
    <property type="term" value="P:wound healing"/>
    <property type="evidence" value="ECO:0007669"/>
    <property type="project" value="Ensembl"/>
</dbReference>
<dbReference type="CDD" id="cd06704">
    <property type="entry name" value="PDZ1_Scribble-like"/>
    <property type="match status" value="1"/>
</dbReference>
<dbReference type="CDD" id="cd06703">
    <property type="entry name" value="PDZ2_Scribble-like"/>
    <property type="match status" value="1"/>
</dbReference>
<dbReference type="CDD" id="cd06702">
    <property type="entry name" value="PDZ3_Scribble-like"/>
    <property type="match status" value="1"/>
</dbReference>
<dbReference type="CDD" id="cd06701">
    <property type="entry name" value="PDZ4_Scribble-like"/>
    <property type="match status" value="1"/>
</dbReference>
<dbReference type="FunFam" id="2.30.42.10:FF:000064">
    <property type="entry name" value="protein lap4 isoform X1"/>
    <property type="match status" value="1"/>
</dbReference>
<dbReference type="FunFam" id="2.30.42.10:FF:000041">
    <property type="entry name" value="protein scribble homolog isoform X1"/>
    <property type="match status" value="1"/>
</dbReference>
<dbReference type="FunFam" id="2.30.42.10:FF:000114">
    <property type="entry name" value="protein scribble homolog isoform X1"/>
    <property type="match status" value="1"/>
</dbReference>
<dbReference type="FunFam" id="3.80.10.10:FF:000036">
    <property type="entry name" value="protein scribble homolog isoform X1"/>
    <property type="match status" value="1"/>
</dbReference>
<dbReference type="FunFam" id="3.80.10.10:FF:000072">
    <property type="entry name" value="protein scribble homolog isoform X1"/>
    <property type="match status" value="1"/>
</dbReference>
<dbReference type="FunFam" id="2.30.42.10:FF:000074">
    <property type="entry name" value="protein scribble homolog isoform X2"/>
    <property type="match status" value="1"/>
</dbReference>
<dbReference type="FunFam" id="3.80.10.10:FF:000202">
    <property type="entry name" value="protein scribble homolog isoform X2"/>
    <property type="match status" value="1"/>
</dbReference>
<dbReference type="FunFam" id="3.80.10.10:FF:000064">
    <property type="entry name" value="Scribbled planar cell polarity protein"/>
    <property type="match status" value="1"/>
</dbReference>
<dbReference type="Gene3D" id="2.30.42.10">
    <property type="match status" value="4"/>
</dbReference>
<dbReference type="Gene3D" id="3.80.10.10">
    <property type="entry name" value="Ribonuclease Inhibitor"/>
    <property type="match status" value="4"/>
</dbReference>
<dbReference type="InterPro" id="IPR001611">
    <property type="entry name" value="Leu-rich_rpt"/>
</dbReference>
<dbReference type="InterPro" id="IPR003591">
    <property type="entry name" value="Leu-rich_rpt_typical-subtyp"/>
</dbReference>
<dbReference type="InterPro" id="IPR032675">
    <property type="entry name" value="LRR_dom_sf"/>
</dbReference>
<dbReference type="InterPro" id="IPR055414">
    <property type="entry name" value="LRR_R13L4/SHOC2-like"/>
</dbReference>
<dbReference type="InterPro" id="IPR001478">
    <property type="entry name" value="PDZ"/>
</dbReference>
<dbReference type="InterPro" id="IPR036034">
    <property type="entry name" value="PDZ_sf"/>
</dbReference>
<dbReference type="InterPro" id="IPR050614">
    <property type="entry name" value="Synaptic_Scaffolding_LAP-MAGUK"/>
</dbReference>
<dbReference type="PANTHER" id="PTHR23119">
    <property type="entry name" value="DISCS LARGE"/>
    <property type="match status" value="1"/>
</dbReference>
<dbReference type="PANTHER" id="PTHR23119:SF57">
    <property type="entry name" value="PROTEIN SCRIBBLE HOMOLOG"/>
    <property type="match status" value="1"/>
</dbReference>
<dbReference type="Pfam" id="PF23598">
    <property type="entry name" value="LRR_14"/>
    <property type="match status" value="1"/>
</dbReference>
<dbReference type="Pfam" id="PF13855">
    <property type="entry name" value="LRR_8"/>
    <property type="match status" value="2"/>
</dbReference>
<dbReference type="Pfam" id="PF00595">
    <property type="entry name" value="PDZ"/>
    <property type="match status" value="4"/>
</dbReference>
<dbReference type="SMART" id="SM00364">
    <property type="entry name" value="LRR_BAC"/>
    <property type="match status" value="10"/>
</dbReference>
<dbReference type="SMART" id="SM00369">
    <property type="entry name" value="LRR_TYP"/>
    <property type="match status" value="11"/>
</dbReference>
<dbReference type="SMART" id="SM00228">
    <property type="entry name" value="PDZ"/>
    <property type="match status" value="4"/>
</dbReference>
<dbReference type="SUPFAM" id="SSF52058">
    <property type="entry name" value="L domain-like"/>
    <property type="match status" value="1"/>
</dbReference>
<dbReference type="SUPFAM" id="SSF50156">
    <property type="entry name" value="PDZ domain-like"/>
    <property type="match status" value="4"/>
</dbReference>
<dbReference type="PROSITE" id="PS51450">
    <property type="entry name" value="LRR"/>
    <property type="match status" value="13"/>
</dbReference>
<dbReference type="PROSITE" id="PS50106">
    <property type="entry name" value="PDZ"/>
    <property type="match status" value="4"/>
</dbReference>
<evidence type="ECO:0000250" key="1">
    <source>
        <dbReference type="UniProtKB" id="A0A8P0N4K0"/>
    </source>
</evidence>
<evidence type="ECO:0000250" key="2">
    <source>
        <dbReference type="UniProtKB" id="Q80U72"/>
    </source>
</evidence>
<evidence type="ECO:0000255" key="3"/>
<evidence type="ECO:0000255" key="4">
    <source>
        <dbReference type="PROSITE-ProRule" id="PRU00143"/>
    </source>
</evidence>
<evidence type="ECO:0000256" key="5">
    <source>
        <dbReference type="SAM" id="MobiDB-lite"/>
    </source>
</evidence>
<evidence type="ECO:0000269" key="6">
    <source>
    </source>
</evidence>
<evidence type="ECO:0000269" key="7">
    <source>
    </source>
</evidence>
<evidence type="ECO:0000269" key="8">
    <source>
    </source>
</evidence>
<evidence type="ECO:0000269" key="9">
    <source>
    </source>
</evidence>
<evidence type="ECO:0000269" key="10">
    <source>
    </source>
</evidence>
<evidence type="ECO:0000269" key="11">
    <source>
    </source>
</evidence>
<evidence type="ECO:0000269" key="12">
    <source>
    </source>
</evidence>
<evidence type="ECO:0000269" key="13">
    <source>
    </source>
</evidence>
<evidence type="ECO:0000269" key="14">
    <source>
    </source>
</evidence>
<evidence type="ECO:0000269" key="15">
    <source>
    </source>
</evidence>
<evidence type="ECO:0000269" key="16">
    <source>
    </source>
</evidence>
<evidence type="ECO:0000269" key="17">
    <source>
    </source>
</evidence>
<evidence type="ECO:0000269" key="18">
    <source>
    </source>
</evidence>
<evidence type="ECO:0000269" key="19">
    <source>
    </source>
</evidence>
<evidence type="ECO:0000269" key="20">
    <source>
    </source>
</evidence>
<evidence type="ECO:0000269" key="21">
    <source>
    </source>
</evidence>
<evidence type="ECO:0000269" key="22">
    <source>
    </source>
</evidence>
<evidence type="ECO:0000269" key="23">
    <source>
    </source>
</evidence>
<evidence type="ECO:0000269" key="24">
    <source>
    </source>
</evidence>
<evidence type="ECO:0000269" key="25">
    <source>
    </source>
</evidence>
<evidence type="ECO:0000269" key="26">
    <source>
    </source>
</evidence>
<evidence type="ECO:0000269" key="27">
    <source>
    </source>
</evidence>
<evidence type="ECO:0000269" key="28">
    <source>
    </source>
</evidence>
<evidence type="ECO:0000269" key="29">
    <source ref="3"/>
</evidence>
<evidence type="ECO:0000305" key="30"/>
<evidence type="ECO:0000312" key="31">
    <source>
        <dbReference type="HGNC" id="HGNC:30377"/>
    </source>
</evidence>
<evidence type="ECO:0007744" key="32">
    <source>
    </source>
</evidence>
<evidence type="ECO:0007744" key="33">
    <source>
    </source>
</evidence>
<evidence type="ECO:0007744" key="34">
    <source>
    </source>
</evidence>
<evidence type="ECO:0007744" key="35">
    <source>
    </source>
</evidence>
<evidence type="ECO:0007744" key="36">
    <source>
    </source>
</evidence>
<evidence type="ECO:0007744" key="37">
    <source>
    </source>
</evidence>
<evidence type="ECO:0007744" key="38">
    <source>
    </source>
</evidence>
<evidence type="ECO:0007744" key="39">
    <source>
    </source>
</evidence>
<evidence type="ECO:0007744" key="40">
    <source>
    </source>
</evidence>
<evidence type="ECO:0007744" key="41">
    <source>
    </source>
</evidence>
<evidence type="ECO:0007829" key="42">
    <source>
        <dbReference type="PDB" id="1UJU"/>
    </source>
</evidence>
<evidence type="ECO:0007829" key="43">
    <source>
        <dbReference type="PDB" id="4WYT"/>
    </source>
</evidence>
<evidence type="ECO:0007829" key="44">
    <source>
        <dbReference type="PDB" id="4WYU"/>
    </source>
</evidence>
<evidence type="ECO:0007829" key="45">
    <source>
        <dbReference type="PDB" id="5VWC"/>
    </source>
</evidence>
<evidence type="ECO:0007829" key="46">
    <source>
        <dbReference type="PDB" id="5VWI"/>
    </source>
</evidence>
<evidence type="ECO:0007829" key="47">
    <source>
        <dbReference type="PDB" id="6EEY"/>
    </source>
</evidence>
<evidence type="ECO:0007829" key="48">
    <source>
        <dbReference type="PDB" id="6ESP"/>
    </source>
</evidence>
<evidence type="ECO:0007829" key="49">
    <source>
        <dbReference type="PDB" id="6MYE"/>
    </source>
</evidence>
<evidence type="ECO:0007829" key="50">
    <source>
        <dbReference type="PDB" id="7QRT"/>
    </source>
</evidence>
<evidence type="ECO:0007829" key="51">
    <source>
        <dbReference type="PDB" id="7QS9"/>
    </source>
</evidence>
<evidence type="ECO:0007829" key="52">
    <source>
        <dbReference type="PDB" id="7QTP"/>
    </source>
</evidence>
<evidence type="ECO:0007829" key="53">
    <source>
        <dbReference type="PDB" id="8B82"/>
    </source>
</evidence>
<evidence type="ECO:0007829" key="54">
    <source>
        <dbReference type="PDB" id="8B8O"/>
    </source>
</evidence>